<organism>
    <name type="scientific">Homo sapiens</name>
    <name type="common">Human</name>
    <dbReference type="NCBI Taxonomy" id="9606"/>
    <lineage>
        <taxon>Eukaryota</taxon>
        <taxon>Metazoa</taxon>
        <taxon>Chordata</taxon>
        <taxon>Craniata</taxon>
        <taxon>Vertebrata</taxon>
        <taxon>Euteleostomi</taxon>
        <taxon>Mammalia</taxon>
        <taxon>Eutheria</taxon>
        <taxon>Euarchontoglires</taxon>
        <taxon>Primates</taxon>
        <taxon>Haplorrhini</taxon>
        <taxon>Catarrhini</taxon>
        <taxon>Hominidae</taxon>
        <taxon>Homo</taxon>
    </lineage>
</organism>
<feature type="signal peptide" evidence="5">
    <location>
        <begin position="1"/>
        <end position="22"/>
    </location>
</feature>
<feature type="chain" id="PRO_0000344441" description="Major histocompatibility complex class I-related protein 1">
    <location>
        <begin position="23"/>
        <end position="341"/>
    </location>
</feature>
<feature type="topological domain" description="Extracellular" evidence="2">
    <location>
        <begin position="23"/>
        <end position="302"/>
    </location>
</feature>
<feature type="transmembrane region" description="Helical" evidence="2">
    <location>
        <begin position="303"/>
        <end position="323"/>
    </location>
</feature>
<feature type="topological domain" description="Cytoplasmic" evidence="2">
    <location>
        <begin position="324"/>
        <end position="341"/>
    </location>
</feature>
<feature type="domain" description="Ig-like C1-type" evidence="2">
    <location>
        <begin position="203"/>
        <end position="299"/>
    </location>
</feature>
<feature type="region of interest" description="Antigen-binding cleft" evidence="13 15 16">
    <location>
        <begin position="23"/>
        <end position="201"/>
    </location>
</feature>
<feature type="region of interest" description="Alpha-1" evidence="2">
    <location>
        <begin position="23"/>
        <end position="109"/>
    </location>
</feature>
<feature type="region of interest" description="Alpha-2" evidence="2">
    <location>
        <begin position="110"/>
        <end position="201"/>
    </location>
</feature>
<feature type="region of interest" description="Alpha-3" evidence="2">
    <location>
        <begin position="202"/>
        <end position="293"/>
    </location>
</feature>
<feature type="region of interest" description="Connecting peptide" evidence="2">
    <location>
        <begin position="294"/>
        <end position="302"/>
    </location>
</feature>
<feature type="binding site" evidence="15 46">
    <location>
        <position position="31"/>
    </location>
    <ligand>
        <name>5-(2-oxoethylideneamino)-6-(D-ribitylamino)uracil</name>
        <dbReference type="ChEBI" id="CHEBI:78397"/>
        <note>pathogen-derived metabolite antigen</note>
    </ligand>
</feature>
<feature type="binding site" evidence="15 16 45 47">
    <location>
        <position position="31"/>
    </location>
    <ligand>
        <name>5-(2-oxopropylideneamino)-6-(D-ribitylamino)uracil</name>
        <dbReference type="ChEBI" id="CHEBI:78398"/>
        <note>pathogen-derived metabolite antigen</note>
    </ligand>
</feature>
<feature type="binding site" evidence="13 14 42 44">
    <location>
        <position position="31"/>
    </location>
    <ligand>
        <name>7-hydroxy-6-methyl-8-(1-D-ribityl)lumazine</name>
        <dbReference type="ChEBI" id="CHEBI:233481"/>
        <note>pathogen-derived metabolite antigen</note>
    </ligand>
</feature>
<feature type="binding site" evidence="29 48">
    <location>
        <position position="31"/>
    </location>
    <ligand>
        <name>8-(9H-purin-6-yl)-2-oxa-8-azabicyclo[3.3.1]nona-3,6-diene-4,6-dicarbaldehyde</name>
        <dbReference type="ChEBI" id="CHEBI:233180"/>
    </ligand>
</feature>
<feature type="binding site" evidence="15 46">
    <location>
        <position position="46"/>
    </location>
    <ligand>
        <name>5-(2-oxoethylideneamino)-6-(D-ribitylamino)uracil</name>
        <dbReference type="ChEBI" id="CHEBI:78397"/>
        <note>pathogen-derived metabolite antigen</note>
    </ligand>
</feature>
<feature type="binding site" evidence="15 16 45 47">
    <location>
        <position position="46"/>
    </location>
    <ligand>
        <name>5-(2-oxopropylideneamino)-6-(D-ribitylamino)uracil</name>
        <dbReference type="ChEBI" id="CHEBI:78398"/>
        <note>pathogen-derived metabolite antigen</note>
    </ligand>
</feature>
<feature type="binding site" evidence="13 14 42 44">
    <location>
        <position position="46"/>
    </location>
    <ligand>
        <name>7-hydroxy-6-methyl-8-(1-D-ribityl)lumazine</name>
        <dbReference type="ChEBI" id="CHEBI:233481"/>
        <note>pathogen-derived metabolite antigen</note>
    </ligand>
</feature>
<feature type="binding site" description="covalent" evidence="11 13 41 43">
    <location>
        <position position="65"/>
    </location>
    <ligand>
        <name>2-amino-4-oxopteridine-6-carbaldehyde</name>
        <dbReference type="ChEBI" id="CHEBI:70981"/>
    </ligand>
</feature>
<feature type="binding site" description="covalent" evidence="15 46">
    <location>
        <position position="65"/>
    </location>
    <ligand>
        <name>5-(2-oxoethylideneamino)-6-(D-ribitylamino)uracil</name>
        <dbReference type="ChEBI" id="CHEBI:78397"/>
        <note>pathogen-derived metabolite antigen</note>
    </ligand>
</feature>
<feature type="binding site" description="covalent" evidence="15 16 45 47">
    <location>
        <position position="65"/>
    </location>
    <ligand>
        <name>5-(2-oxopropylideneamino)-6-(D-ribitylamino)uracil</name>
        <dbReference type="ChEBI" id="CHEBI:78398"/>
        <note>pathogen-derived metabolite antigen</note>
    </ligand>
</feature>
<feature type="binding site" evidence="13 44">
    <location>
        <position position="65"/>
    </location>
    <ligand>
        <name>7-hydroxy-6-methyl-8-(1-D-ribityl)lumazine</name>
        <dbReference type="ChEBI" id="CHEBI:233481"/>
        <note>pathogen-derived metabolite antigen</note>
    </ligand>
</feature>
<feature type="binding site" description="covalent" evidence="29 48">
    <location>
        <position position="65"/>
    </location>
    <ligand>
        <name>8-(9H-purin-6-yl)-2-oxa-8-azabicyclo[3.3.1]nona-3,6-diene-4,6-dicarbaldehyde</name>
        <dbReference type="ChEBI" id="CHEBI:233180"/>
    </ligand>
</feature>
<feature type="binding site" description="covalent" evidence="28 49">
    <location>
        <position position="65"/>
    </location>
    <ligand>
        <name>pyridoxal</name>
        <dbReference type="ChEBI" id="CHEBI:17310"/>
    </ligand>
</feature>
<feature type="binding site" evidence="29 48">
    <location>
        <position position="80"/>
    </location>
    <ligand>
        <name>8-(9H-purin-6-yl)-2-oxa-8-azabicyclo[3.3.1]nona-3,6-diene-4,6-dicarbaldehyde</name>
        <dbReference type="ChEBI" id="CHEBI:233180"/>
    </ligand>
</feature>
<feature type="binding site" evidence="15 46">
    <location>
        <position position="116"/>
    </location>
    <ligand>
        <name>5-(2-oxoethylideneamino)-6-(D-ribitylamino)uracil</name>
        <dbReference type="ChEBI" id="CHEBI:78397"/>
        <note>pathogen-derived metabolite antigen</note>
    </ligand>
</feature>
<feature type="binding site" evidence="15 16 45 47">
    <location>
        <position position="116"/>
    </location>
    <ligand>
        <name>5-(2-oxopropylideneamino)-6-(D-ribitylamino)uracil</name>
        <dbReference type="ChEBI" id="CHEBI:78398"/>
        <note>pathogen-derived metabolite antigen</note>
    </ligand>
</feature>
<feature type="binding site" evidence="13 14 42 44">
    <location>
        <position position="116"/>
    </location>
    <ligand>
        <name>7-hydroxy-6-methyl-8-(1-D-ribityl)lumazine</name>
        <dbReference type="ChEBI" id="CHEBI:233481"/>
        <note>pathogen-derived metabolite antigen</note>
    </ligand>
</feature>
<feature type="binding site" evidence="29 48">
    <location>
        <position position="116"/>
    </location>
    <ligand>
        <name>8-(9H-purin-6-yl)-2-oxa-8-azabicyclo[3.3.1]nona-3,6-diene-4,6-dicarbaldehyde</name>
        <dbReference type="ChEBI" id="CHEBI:233180"/>
    </ligand>
</feature>
<feature type="binding site" evidence="15 46">
    <location>
        <position position="174"/>
    </location>
    <ligand>
        <name>5-(2-oxoethylideneamino)-6-(D-ribitylamino)uracil</name>
        <dbReference type="ChEBI" id="CHEBI:78397"/>
        <note>pathogen-derived metabolite antigen</note>
    </ligand>
</feature>
<feature type="binding site" evidence="15 16 45 47">
    <location>
        <position position="174"/>
    </location>
    <ligand>
        <name>5-(2-oxopropylideneamino)-6-(D-ribitylamino)uracil</name>
        <dbReference type="ChEBI" id="CHEBI:78398"/>
        <note>pathogen-derived metabolite antigen</note>
    </ligand>
</feature>
<feature type="binding site" evidence="13 14 42 44">
    <location>
        <position position="174"/>
    </location>
    <ligand>
        <name>7-hydroxy-6-methyl-8-(1-D-ribityl)lumazine</name>
        <dbReference type="ChEBI" id="CHEBI:233481"/>
        <note>pathogen-derived metabolite antigen</note>
    </ligand>
</feature>
<feature type="binding site" evidence="15 46">
    <location>
        <position position="175"/>
    </location>
    <ligand>
        <name>5-(2-oxoethylideneamino)-6-(D-ribitylamino)uracil</name>
        <dbReference type="ChEBI" id="CHEBI:78397"/>
        <note>pathogen-derived metabolite antigen</note>
    </ligand>
</feature>
<feature type="binding site" evidence="15 16 45 47">
    <location>
        <position position="175"/>
    </location>
    <ligand>
        <name>5-(2-oxopropylideneamino)-6-(D-ribitylamino)uracil</name>
        <dbReference type="ChEBI" id="CHEBI:78398"/>
        <note>pathogen-derived metabolite antigen</note>
    </ligand>
</feature>
<feature type="binding site" evidence="13 44">
    <location>
        <position position="175"/>
    </location>
    <ligand>
        <name>7-hydroxy-6-methyl-8-(1-D-ribityl)lumazine</name>
        <dbReference type="ChEBI" id="CHEBI:233481"/>
        <note>pathogen-derived metabolite antigen</note>
    </ligand>
</feature>
<feature type="glycosylation site" description="N-linked (GlcNAc...) asparagine" evidence="5">
    <location>
        <position position="107"/>
    </location>
</feature>
<feature type="disulfide bond" evidence="3 11 15 16">
    <location>
        <begin position="120"/>
        <end position="183"/>
    </location>
</feature>
<feature type="disulfide bond" evidence="3 11 15 16">
    <location>
        <begin position="222"/>
        <end position="278"/>
    </location>
</feature>
<feature type="splice variant" id="VSP_034755" description="In isoform 2." evidence="34">
    <location>
        <begin position="110"/>
        <end position="154"/>
    </location>
</feature>
<feature type="splice variant" id="VSP_043479" description="In isoform 5." evidence="33">
    <location>
        <begin position="202"/>
        <end position="328"/>
    </location>
</feature>
<feature type="splice variant" id="VSP_034756" description="In isoform 4." evidence="37">
    <original>EPPLVRVNRKETFPGVTAL</original>
    <variation>GKEKEKASFPHCLNNCFYT</variation>
    <location>
        <begin position="202"/>
        <end position="220"/>
    </location>
</feature>
<feature type="splice variant" id="VSP_034757" description="In isoform 3." evidence="33 37">
    <location>
        <begin position="203"/>
        <end position="294"/>
    </location>
</feature>
<feature type="splice variant" id="VSP_034758" description="In isoform 4." evidence="37">
    <location>
        <begin position="221"/>
        <end position="341"/>
    </location>
</feature>
<feature type="sequence variant" id="VAR_090339" description="In allele MR1*04; found in an individual with unexplained primary immunodeficiency; selective loss of circulating MAIT cells and other MR1-restricted T cell clones; decreased memory B cell frequencies; sevenfold increased circulating gamma-delta T cell frequency due to expansion of Vgamma9/Vdelta2-positive T cells; decreased B cell antigen presentation to allogeneic MAIT cells; loss of 5-OP-RU binding; increased internalization rate of both ligand-free and ligand-bound forms; no effect on antibacterial response ex vivo; no effect on vaccine response; dbSNP:rs41268456." evidence="23 25">
    <original>R</original>
    <variation>H</variation>
    <location>
        <position position="31"/>
    </location>
</feature>
<feature type="sequence variant" id="VAR_045608" description="In allele MR1*02 and allele MR1*04; dbSNP:rs2236410." evidence="25 32">
    <original>H</original>
    <variation>R</variation>
    <location>
        <position position="39"/>
    </location>
</feature>
<feature type="sequence variant" id="VAR_045609" description="In dbSNP:rs3897433.">
    <original>R</original>
    <variation>Q</variation>
    <location>
        <position position="63"/>
    </location>
</feature>
<feature type="sequence variant" id="VAR_090340" description="In allele MR1*05; dbSNP:rs376289951." evidence="25">
    <original>E</original>
    <variation>G</variation>
    <location>
        <position position="74"/>
    </location>
</feature>
<feature type="sequence variant" id="VAR_045610" description="In dbSNP:rs3897434.">
    <original>A</original>
    <variation>V</variation>
    <location>
        <position position="77"/>
    </location>
</feature>
<feature type="sequence variant" id="VAR_090341" description="In allele MR1*05; dbSNP:rs577996797." evidence="25">
    <original>H</original>
    <variation>Q</variation>
    <location>
        <position position="112"/>
    </location>
</feature>
<feature type="sequence variant" id="VAR_090342" description="In allele MR1*03; dbSNP:rs374009364." evidence="25">
    <original>I</original>
    <variation>V</variation>
    <location>
        <position position="143"/>
    </location>
</feature>
<feature type="sequence variant" id="VAR_090343" description="In allele MR1*05; dbSNP:rs186300848." evidence="25">
    <original>I</original>
    <variation>V</variation>
    <location>
        <position position="266"/>
    </location>
</feature>
<feature type="sequence variant" id="VAR_090344" description="In allele MR1*06; dbSNP:rs754650505." evidence="25">
    <original>R</original>
    <variation>K</variation>
    <location>
        <position position="326"/>
    </location>
</feature>
<feature type="mutagenesis site" description="Associates with B2M and translocates to plasma membrane in the absence of 6-FP. Refolds and adopts a stable structural conformation in the absence of ligand in vitro. Impairs recognition by pan-cancer TCR, MC.7.G5. Loss of pyridoxal binding." evidence="14 17 21 28">
    <original>K</original>
    <variation>A</variation>
    <location>
        <position position="65"/>
    </location>
</feature>
<feature type="mutagenesis site" description="Fails to refold in the presence of 6-FP. Impairs the association with B2M and translocation to the plasma membrane." evidence="11 17">
    <original>K</original>
    <variation>R</variation>
    <location>
        <position position="65"/>
    </location>
</feature>
<feature type="mutagenesis site" description="Markedly decreases expression at the cell surface likely due to protein misfolding." evidence="26">
    <original>M</original>
    <variation>P</variation>
    <location>
        <position position="72"/>
    </location>
</feature>
<feature type="mutagenesis site" description="Markedly decreases expression at the cell surface likely due to protein misfolding." evidence="26">
    <original>H</original>
    <variation>P</variation>
    <location>
        <position position="105"/>
    </location>
</feature>
<feature type="mutagenesis site" description="Able to activate mouse MAIT cells (xeno-reactivity)." evidence="7">
    <original>Q</original>
    <variation>L</variation>
    <location>
        <position position="169"/>
    </location>
</feature>
<feature type="mutagenesis site" description="Markedly decreases expression at the cell surface likely due to protein misfolding." evidence="26">
    <original>Q</original>
    <variation>P</variation>
    <location>
        <position position="175"/>
    </location>
</feature>
<feature type="sequence conflict" description="In Ref. 3; BAF83063." evidence="38" ref="3">
    <original>M</original>
    <variation>V</variation>
    <location>
        <position position="117"/>
    </location>
</feature>
<feature type="sequence conflict" description="In Ref. 4; BAD96630." evidence="38" ref="4">
    <original>R</original>
    <variation>G</variation>
    <location>
        <position position="200"/>
    </location>
</feature>
<feature type="sequence conflict" description="In Ref. 4; BAD96630." evidence="38" ref="4">
    <original>L</original>
    <variation>P</variation>
    <location>
        <position position="315"/>
    </location>
</feature>
<feature type="strand" evidence="52">
    <location>
        <begin position="25"/>
        <end position="36"/>
    </location>
</feature>
<feature type="strand" evidence="55">
    <location>
        <begin position="39"/>
        <end position="41"/>
    </location>
</feature>
<feature type="strand" evidence="52">
    <location>
        <begin position="43"/>
        <end position="50"/>
    </location>
</feature>
<feature type="strand" evidence="52">
    <location>
        <begin position="53"/>
        <end position="59"/>
    </location>
</feature>
<feature type="turn" evidence="52">
    <location>
        <begin position="60"/>
        <end position="62"/>
    </location>
</feature>
<feature type="strand" evidence="52">
    <location>
        <begin position="66"/>
        <end position="69"/>
    </location>
</feature>
<feature type="helix" evidence="52">
    <location>
        <begin position="70"/>
        <end position="73"/>
    </location>
</feature>
<feature type="strand" evidence="51">
    <location>
        <begin position="74"/>
        <end position="76"/>
    </location>
</feature>
<feature type="helix" evidence="52">
    <location>
        <begin position="78"/>
        <end position="106"/>
    </location>
</feature>
<feature type="strand" evidence="52">
    <location>
        <begin position="113"/>
        <end position="122"/>
    </location>
</feature>
<feature type="strand" evidence="52">
    <location>
        <begin position="128"/>
        <end position="136"/>
    </location>
</feature>
<feature type="strand" evidence="52">
    <location>
        <begin position="139"/>
        <end position="145"/>
    </location>
</feature>
<feature type="turn" evidence="52">
    <location>
        <begin position="146"/>
        <end position="149"/>
    </location>
</feature>
<feature type="strand" evidence="52">
    <location>
        <begin position="150"/>
        <end position="155"/>
    </location>
</feature>
<feature type="helix" evidence="52">
    <location>
        <begin position="156"/>
        <end position="166"/>
    </location>
</feature>
<feature type="helix" evidence="52">
    <location>
        <begin position="169"/>
        <end position="180"/>
    </location>
</feature>
<feature type="helix" evidence="52">
    <location>
        <begin position="182"/>
        <end position="193"/>
    </location>
</feature>
<feature type="helix" evidence="52">
    <location>
        <begin position="195"/>
        <end position="198"/>
    </location>
</feature>
<feature type="strand" evidence="52">
    <location>
        <begin position="205"/>
        <end position="210"/>
    </location>
</feature>
<feature type="strand" evidence="54">
    <location>
        <begin position="214"/>
        <end position="216"/>
    </location>
</feature>
<feature type="strand" evidence="52">
    <location>
        <begin position="219"/>
        <end position="230"/>
    </location>
</feature>
<feature type="strand" evidence="52">
    <location>
        <begin position="233"/>
        <end position="238"/>
    </location>
</feature>
<feature type="turn" evidence="50">
    <location>
        <begin position="239"/>
        <end position="241"/>
    </location>
</feature>
<feature type="helix" evidence="52">
    <location>
        <begin position="244"/>
        <end position="246"/>
    </location>
</feature>
<feature type="strand" evidence="52">
    <location>
        <begin position="247"/>
        <end position="249"/>
    </location>
</feature>
<feature type="strand" evidence="52">
    <location>
        <begin position="256"/>
        <end position="258"/>
    </location>
</feature>
<feature type="strand" evidence="52">
    <location>
        <begin position="260"/>
        <end position="267"/>
    </location>
</feature>
<feature type="strand" evidence="53">
    <location>
        <begin position="270"/>
        <end position="272"/>
    </location>
</feature>
<feature type="strand" evidence="52">
    <location>
        <begin position="276"/>
        <end position="282"/>
    </location>
</feature>
<feature type="strand" evidence="52">
    <location>
        <begin position="285"/>
        <end position="290"/>
    </location>
</feature>
<protein>
    <recommendedName>
        <fullName>Major histocompatibility complex class I-related protein 1</fullName>
        <shortName>MHC class I-related protein 1</shortName>
    </recommendedName>
    <alternativeName>
        <fullName>Class I histocompatibility antigen-like protein</fullName>
    </alternativeName>
</protein>
<keyword id="KW-0002">3D-structure</keyword>
<keyword id="KW-0025">Alternative splicing</keyword>
<keyword id="KW-1003">Cell membrane</keyword>
<keyword id="KW-1015">Disulfide bond</keyword>
<keyword id="KW-0256">Endoplasmic reticulum</keyword>
<keyword id="KW-0967">Endosome</keyword>
<keyword id="KW-0325">Glycoprotein</keyword>
<keyword id="KW-0333">Golgi apparatus</keyword>
<keyword id="KW-0391">Immunity</keyword>
<keyword id="KW-0393">Immunoglobulin domain</keyword>
<keyword id="KW-0399">Innate immunity</keyword>
<keyword id="KW-0472">Membrane</keyword>
<keyword id="KW-0490">MHC I</keyword>
<keyword id="KW-1267">Proteomics identification</keyword>
<keyword id="KW-1185">Reference proteome</keyword>
<keyword id="KW-0964">Secreted</keyword>
<keyword id="KW-0732">Signal</keyword>
<keyword id="KW-0812">Transmembrane</keyword>
<keyword id="KW-1133">Transmembrane helix</keyword>
<evidence type="ECO:0000250" key="1">
    <source>
        <dbReference type="UniProtKB" id="Q8HWB0"/>
    </source>
</evidence>
<evidence type="ECO:0000255" key="2"/>
<evidence type="ECO:0000255" key="3">
    <source>
        <dbReference type="PROSITE-ProRule" id="PRU00114"/>
    </source>
</evidence>
<evidence type="ECO:0000269" key="4">
    <source>
    </source>
</evidence>
<evidence type="ECO:0000269" key="5">
    <source>
    </source>
</evidence>
<evidence type="ECO:0000269" key="6">
    <source>
    </source>
</evidence>
<evidence type="ECO:0000269" key="7">
    <source>
    </source>
</evidence>
<evidence type="ECO:0000269" key="8">
    <source>
    </source>
</evidence>
<evidence type="ECO:0000269" key="9">
    <source>
    </source>
</evidence>
<evidence type="ECO:0000269" key="10">
    <source>
    </source>
</evidence>
<evidence type="ECO:0000269" key="11">
    <source>
    </source>
</evidence>
<evidence type="ECO:0000269" key="12">
    <source>
    </source>
</evidence>
<evidence type="ECO:0000269" key="13">
    <source>
    </source>
</evidence>
<evidence type="ECO:0000269" key="14">
    <source>
    </source>
</evidence>
<evidence type="ECO:0000269" key="15">
    <source>
    </source>
</evidence>
<evidence type="ECO:0000269" key="16">
    <source>
    </source>
</evidence>
<evidence type="ECO:0000269" key="17">
    <source>
    </source>
</evidence>
<evidence type="ECO:0000269" key="18">
    <source>
    </source>
</evidence>
<evidence type="ECO:0000269" key="19">
    <source>
    </source>
</evidence>
<evidence type="ECO:0000269" key="20">
    <source>
    </source>
</evidence>
<evidence type="ECO:0000269" key="21">
    <source>
    </source>
</evidence>
<evidence type="ECO:0000269" key="22">
    <source>
    </source>
</evidence>
<evidence type="ECO:0000269" key="23">
    <source>
    </source>
</evidence>
<evidence type="ECO:0000269" key="24">
    <source>
    </source>
</evidence>
<evidence type="ECO:0000269" key="25">
    <source>
    </source>
</evidence>
<evidence type="ECO:0000269" key="26">
    <source>
    </source>
</evidence>
<evidence type="ECO:0000269" key="27">
    <source>
    </source>
</evidence>
<evidence type="ECO:0000269" key="28">
    <source>
    </source>
</evidence>
<evidence type="ECO:0000269" key="29">
    <source>
    </source>
</evidence>
<evidence type="ECO:0000269" key="30">
    <source>
    </source>
</evidence>
<evidence type="ECO:0000269" key="31">
    <source>
    </source>
</evidence>
<evidence type="ECO:0000269" key="32">
    <source ref="11"/>
</evidence>
<evidence type="ECO:0000303" key="33">
    <source>
    </source>
</evidence>
<evidence type="ECO:0000303" key="34">
    <source>
    </source>
</evidence>
<evidence type="ECO:0000303" key="35">
    <source>
    </source>
</evidence>
<evidence type="ECO:0000303" key="36">
    <source>
    </source>
</evidence>
<evidence type="ECO:0000303" key="37">
    <source>
    </source>
</evidence>
<evidence type="ECO:0000305" key="38"/>
<evidence type="ECO:0000305" key="39">
    <source>
    </source>
</evidence>
<evidence type="ECO:0000312" key="40">
    <source>
        <dbReference type="HGNC" id="HGNC:4975"/>
    </source>
</evidence>
<evidence type="ECO:0000312" key="41">
    <source>
        <dbReference type="PDB" id="4GUP"/>
    </source>
</evidence>
<evidence type="ECO:0000312" key="42">
    <source>
        <dbReference type="PDB" id="4LCW"/>
    </source>
</evidence>
<evidence type="ECO:0007744" key="43">
    <source>
        <dbReference type="PDB" id="4L4T"/>
    </source>
</evidence>
<evidence type="ECO:0007744" key="44">
    <source>
        <dbReference type="PDB" id="4L4V"/>
    </source>
</evidence>
<evidence type="ECO:0007744" key="45">
    <source>
        <dbReference type="PDB" id="4NQC"/>
    </source>
</evidence>
<evidence type="ECO:0007744" key="46">
    <source>
        <dbReference type="PDB" id="4NQE"/>
    </source>
</evidence>
<evidence type="ECO:0007744" key="47">
    <source>
        <dbReference type="PDB" id="5D5M"/>
    </source>
</evidence>
<evidence type="ECO:0007744" key="48">
    <source>
        <dbReference type="PDB" id="8BP6"/>
    </source>
</evidence>
<evidence type="ECO:0007744" key="49">
    <source>
        <dbReference type="PDB" id="9CGR"/>
    </source>
</evidence>
<evidence type="ECO:0007829" key="50">
    <source>
        <dbReference type="PDB" id="4PJ9"/>
    </source>
</evidence>
<evidence type="ECO:0007829" key="51">
    <source>
        <dbReference type="PDB" id="6MWR"/>
    </source>
</evidence>
<evidence type="ECO:0007829" key="52">
    <source>
        <dbReference type="PDB" id="6PUD"/>
    </source>
</evidence>
<evidence type="ECO:0007829" key="53">
    <source>
        <dbReference type="PDB" id="6PUG"/>
    </source>
</evidence>
<evidence type="ECO:0007829" key="54">
    <source>
        <dbReference type="PDB" id="7ZT2"/>
    </source>
</evidence>
<evidence type="ECO:0007829" key="55">
    <source>
        <dbReference type="PDB" id="7ZT7"/>
    </source>
</evidence>
<dbReference type="EMBL" id="U22963">
    <property type="protein sequence ID" value="AAC50174.1"/>
    <property type="molecule type" value="mRNA"/>
</dbReference>
<dbReference type="EMBL" id="AJ249778">
    <property type="protein sequence ID" value="CAB77667.1"/>
    <property type="molecule type" value="mRNA"/>
</dbReference>
<dbReference type="EMBL" id="AK290374">
    <property type="protein sequence ID" value="BAF83063.1"/>
    <property type="molecule type" value="mRNA"/>
</dbReference>
<dbReference type="EMBL" id="AK304645">
    <property type="protein sequence ID" value="BAG65423.1"/>
    <property type="molecule type" value="mRNA"/>
</dbReference>
<dbReference type="EMBL" id="AK222910">
    <property type="protein sequence ID" value="BAD96630.1"/>
    <property type="molecule type" value="mRNA"/>
</dbReference>
<dbReference type="EMBL" id="AL356267">
    <property type="status" value="NOT_ANNOTATED_CDS"/>
    <property type="molecule type" value="Genomic_DNA"/>
</dbReference>
<dbReference type="EMBL" id="CH471067">
    <property type="protein sequence ID" value="EAW91097.1"/>
    <property type="molecule type" value="Genomic_DNA"/>
</dbReference>
<dbReference type="EMBL" id="CH471067">
    <property type="protein sequence ID" value="EAW91098.1"/>
    <property type="molecule type" value="Genomic_DNA"/>
</dbReference>
<dbReference type="EMBL" id="CH471067">
    <property type="protein sequence ID" value="EAW91095.1"/>
    <property type="molecule type" value="Genomic_DNA"/>
</dbReference>
<dbReference type="EMBL" id="BC012485">
    <property type="protein sequence ID" value="AAH12485.1"/>
    <property type="molecule type" value="mRNA"/>
</dbReference>
<dbReference type="EMBL" id="AF010446">
    <property type="protein sequence ID" value="AAD01442.1"/>
    <property type="molecule type" value="mRNA"/>
</dbReference>
<dbReference type="EMBL" id="AF010447">
    <property type="protein sequence ID" value="AAD01443.1"/>
    <property type="status" value="ALT_INIT"/>
    <property type="molecule type" value="mRNA"/>
</dbReference>
<dbReference type="EMBL" id="AF031469">
    <property type="protein sequence ID" value="AAD01933.1"/>
    <property type="molecule type" value="mRNA"/>
</dbReference>
<dbReference type="EMBL" id="AF039526">
    <property type="protein sequence ID" value="AAD02172.1"/>
    <property type="molecule type" value="Genomic_DNA"/>
</dbReference>
<dbReference type="EMBL" id="AH006983">
    <property type="protein sequence ID" value="AAC72900.1"/>
    <property type="molecule type" value="Genomic_DNA"/>
</dbReference>
<dbReference type="EMBL" id="MW239102">
    <property type="protein sequence ID" value="UNJ77568.1"/>
    <property type="molecule type" value="Genomic_DNA"/>
</dbReference>
<dbReference type="EMBL" id="MW239105">
    <property type="protein sequence ID" value="UNJ77571.1"/>
    <property type="molecule type" value="Genomic_DNA"/>
</dbReference>
<dbReference type="EMBL" id="MW239106">
    <property type="protein sequence ID" value="UNJ77572.1"/>
    <property type="molecule type" value="Genomic_DNA"/>
</dbReference>
<dbReference type="EMBL" id="MW239107">
    <property type="protein sequence ID" value="UNJ77573.1"/>
    <property type="molecule type" value="Genomic_DNA"/>
</dbReference>
<dbReference type="EMBL" id="MW239108">
    <property type="protein sequence ID" value="UNJ77574.1"/>
    <property type="molecule type" value="Genomic_DNA"/>
</dbReference>
<dbReference type="EMBL" id="MW239110">
    <property type="protein sequence ID" value="UNJ77576.1"/>
    <property type="molecule type" value="Genomic_DNA"/>
</dbReference>
<dbReference type="EMBL" id="AF223407">
    <property type="protein sequence ID" value="AAF40170.1"/>
    <property type="molecule type" value="Genomic_DNA"/>
</dbReference>
<dbReference type="CCDS" id="CCDS1342.1">
    <molecule id="Q95460-1"/>
</dbReference>
<dbReference type="CCDS" id="CCDS53440.1">
    <molecule id="Q95460-3"/>
</dbReference>
<dbReference type="CCDS" id="CCDS53441.1">
    <molecule id="Q95460-5"/>
</dbReference>
<dbReference type="CCDS" id="CCDS53442.1">
    <molecule id="Q95460-2"/>
</dbReference>
<dbReference type="PIR" id="A57136">
    <property type="entry name" value="A57136"/>
</dbReference>
<dbReference type="RefSeq" id="NP_001181928.1">
    <molecule id="Q95460-2"/>
    <property type="nucleotide sequence ID" value="NM_001194999.2"/>
</dbReference>
<dbReference type="RefSeq" id="NP_001181929.1">
    <molecule id="Q95460-3"/>
    <property type="nucleotide sequence ID" value="NM_001195000.2"/>
</dbReference>
<dbReference type="RefSeq" id="NP_001181964.1">
    <molecule id="Q95460-5"/>
    <property type="nucleotide sequence ID" value="NM_001195035.2"/>
</dbReference>
<dbReference type="RefSeq" id="NP_001372090.1">
    <molecule id="Q95460-1"/>
    <property type="nucleotide sequence ID" value="NM_001385161.1"/>
</dbReference>
<dbReference type="RefSeq" id="NP_001372092.1">
    <molecule id="Q95460-4"/>
    <property type="nucleotide sequence ID" value="NM_001385163.1"/>
</dbReference>
<dbReference type="RefSeq" id="NP_001372093.1">
    <molecule id="Q95460-3"/>
    <property type="nucleotide sequence ID" value="NM_001385164.1"/>
</dbReference>
<dbReference type="RefSeq" id="NP_001522.1">
    <molecule id="Q95460-1"/>
    <property type="nucleotide sequence ID" value="NM_001531.3"/>
</dbReference>
<dbReference type="PDB" id="4GUP">
    <property type="method" value="X-ray"/>
    <property type="resolution" value="3.20 A"/>
    <property type="chains" value="A/C=23-292"/>
</dbReference>
<dbReference type="PDB" id="4L4T">
    <property type="method" value="X-ray"/>
    <property type="resolution" value="2.00 A"/>
    <property type="chains" value="A/C=23-292"/>
</dbReference>
<dbReference type="PDB" id="4L4V">
    <property type="method" value="X-ray"/>
    <property type="resolution" value="1.90 A"/>
    <property type="chains" value="A/C=23-292"/>
</dbReference>
<dbReference type="PDB" id="4LCW">
    <property type="method" value="X-ray"/>
    <property type="resolution" value="2.40 A"/>
    <property type="chains" value="A/C=23-292"/>
</dbReference>
<dbReference type="PDB" id="4NQC">
    <property type="method" value="X-ray"/>
    <property type="resolution" value="2.50 A"/>
    <property type="chains" value="A/C=23-292"/>
</dbReference>
<dbReference type="PDB" id="4NQD">
    <property type="method" value="X-ray"/>
    <property type="resolution" value="2.20 A"/>
    <property type="chains" value="A/C=23-292"/>
</dbReference>
<dbReference type="PDB" id="4NQE">
    <property type="method" value="X-ray"/>
    <property type="resolution" value="2.10 A"/>
    <property type="chains" value="A/C=23-292"/>
</dbReference>
<dbReference type="PDB" id="4PJ5">
    <property type="method" value="X-ray"/>
    <property type="resolution" value="2.00 A"/>
    <property type="chains" value="A/C=23-292"/>
</dbReference>
<dbReference type="PDB" id="4PJ7">
    <property type="method" value="X-ray"/>
    <property type="resolution" value="2.50 A"/>
    <property type="chains" value="A/C=23-292"/>
</dbReference>
<dbReference type="PDB" id="4PJ8">
    <property type="method" value="X-ray"/>
    <property type="resolution" value="3.30 A"/>
    <property type="chains" value="A=23-292"/>
</dbReference>
<dbReference type="PDB" id="4PJ9">
    <property type="method" value="X-ray"/>
    <property type="resolution" value="2.00 A"/>
    <property type="chains" value="A=23-292"/>
</dbReference>
<dbReference type="PDB" id="4PJA">
    <property type="method" value="X-ray"/>
    <property type="resolution" value="2.68 A"/>
    <property type="chains" value="A/C=23-292"/>
</dbReference>
<dbReference type="PDB" id="4PJB">
    <property type="method" value="X-ray"/>
    <property type="resolution" value="2.85 A"/>
    <property type="chains" value="A/C=23-292"/>
</dbReference>
<dbReference type="PDB" id="4PJC">
    <property type="method" value="X-ray"/>
    <property type="resolution" value="2.50 A"/>
    <property type="chains" value="A/C=23-292"/>
</dbReference>
<dbReference type="PDB" id="4PJD">
    <property type="method" value="X-ray"/>
    <property type="resolution" value="2.78 A"/>
    <property type="chains" value="A/C=23-292"/>
</dbReference>
<dbReference type="PDB" id="4PJE">
    <property type="method" value="X-ray"/>
    <property type="resolution" value="1.95 A"/>
    <property type="chains" value="A/C=23-292"/>
</dbReference>
<dbReference type="PDB" id="4PJF">
    <property type="method" value="X-ray"/>
    <property type="resolution" value="2.45 A"/>
    <property type="chains" value="A/C=23-292"/>
</dbReference>
<dbReference type="PDB" id="4PJG">
    <property type="method" value="X-ray"/>
    <property type="resolution" value="2.40 A"/>
    <property type="chains" value="A/C=23-292"/>
</dbReference>
<dbReference type="PDB" id="4PJH">
    <property type="method" value="X-ray"/>
    <property type="resolution" value="2.00 A"/>
    <property type="chains" value="A/C=23-292"/>
</dbReference>
<dbReference type="PDB" id="4PJI">
    <property type="method" value="X-ray"/>
    <property type="resolution" value="2.50 A"/>
    <property type="chains" value="A/C=23-292"/>
</dbReference>
<dbReference type="PDB" id="4PJX">
    <property type="method" value="X-ray"/>
    <property type="resolution" value="2.25 A"/>
    <property type="chains" value="A/C=23-292"/>
</dbReference>
<dbReference type="PDB" id="5D5M">
    <property type="method" value="X-ray"/>
    <property type="resolution" value="2.20 A"/>
    <property type="chains" value="A/C=23-292"/>
</dbReference>
<dbReference type="PDB" id="5D7I">
    <property type="method" value="X-ray"/>
    <property type="resolution" value="2.00 A"/>
    <property type="chains" value="A/C=23-292"/>
</dbReference>
<dbReference type="PDB" id="5D7J">
    <property type="method" value="X-ray"/>
    <property type="resolution" value="1.97 A"/>
    <property type="chains" value="C/E=23-292"/>
</dbReference>
<dbReference type="PDB" id="5D7L">
    <property type="method" value="X-ray"/>
    <property type="resolution" value="3.40 A"/>
    <property type="chains" value="A/C=23-292"/>
</dbReference>
<dbReference type="PDB" id="5U16">
    <property type="method" value="X-ray"/>
    <property type="resolution" value="2.00 A"/>
    <property type="chains" value="A/C=23-292"/>
</dbReference>
<dbReference type="PDB" id="5U17">
    <property type="method" value="X-ray"/>
    <property type="resolution" value="2.15 A"/>
    <property type="chains" value="A/C=23-292"/>
</dbReference>
<dbReference type="PDB" id="5U1R">
    <property type="method" value="X-ray"/>
    <property type="resolution" value="2.70 A"/>
    <property type="chains" value="A/C=23-292"/>
</dbReference>
<dbReference type="PDB" id="5U2V">
    <property type="method" value="X-ray"/>
    <property type="resolution" value="2.20 A"/>
    <property type="chains" value="A/C=23-292"/>
</dbReference>
<dbReference type="PDB" id="5U6Q">
    <property type="method" value="X-ray"/>
    <property type="resolution" value="1.90 A"/>
    <property type="chains" value="A/C=23-292"/>
</dbReference>
<dbReference type="PDB" id="5U72">
    <property type="method" value="X-ray"/>
    <property type="resolution" value="2.50 A"/>
    <property type="chains" value="A/C=23-292"/>
</dbReference>
<dbReference type="PDB" id="6MWR">
    <property type="method" value="X-ray"/>
    <property type="resolution" value="3.30 A"/>
    <property type="chains" value="A=23-292"/>
</dbReference>
<dbReference type="PDB" id="6PUC">
    <property type="method" value="X-ray"/>
    <property type="resolution" value="1.85 A"/>
    <property type="chains" value="A/C=23-292"/>
</dbReference>
<dbReference type="PDB" id="6PUD">
    <property type="method" value="X-ray"/>
    <property type="resolution" value="1.80 A"/>
    <property type="chains" value="A/C=23-292"/>
</dbReference>
<dbReference type="PDB" id="6PUE">
    <property type="method" value="X-ray"/>
    <property type="resolution" value="1.90 A"/>
    <property type="chains" value="A/C=23-292"/>
</dbReference>
<dbReference type="PDB" id="6PUF">
    <property type="method" value="X-ray"/>
    <property type="resolution" value="1.92 A"/>
    <property type="chains" value="A/C=23-292"/>
</dbReference>
<dbReference type="PDB" id="6PUG">
    <property type="method" value="X-ray"/>
    <property type="resolution" value="1.80 A"/>
    <property type="chains" value="A/C=23-292"/>
</dbReference>
<dbReference type="PDB" id="6PUH">
    <property type="method" value="X-ray"/>
    <property type="resolution" value="1.88 A"/>
    <property type="chains" value="A/C=23-292"/>
</dbReference>
<dbReference type="PDB" id="6PUI">
    <property type="method" value="X-ray"/>
    <property type="resolution" value="1.96 A"/>
    <property type="chains" value="A/C=23-292"/>
</dbReference>
<dbReference type="PDB" id="6PUJ">
    <property type="method" value="X-ray"/>
    <property type="resolution" value="1.92 A"/>
    <property type="chains" value="A/C=23-292"/>
</dbReference>
<dbReference type="PDB" id="6PUK">
    <property type="method" value="X-ray"/>
    <property type="resolution" value="2.08 A"/>
    <property type="chains" value="A/C=23-292"/>
</dbReference>
<dbReference type="PDB" id="6PUL">
    <property type="method" value="X-ray"/>
    <property type="resolution" value="1.84 A"/>
    <property type="chains" value="A/C=23-292"/>
</dbReference>
<dbReference type="PDB" id="6PUM">
    <property type="method" value="X-ray"/>
    <property type="resolution" value="1.96 A"/>
    <property type="chains" value="A/C=23-292"/>
</dbReference>
<dbReference type="PDB" id="6PVC">
    <property type="method" value="X-ray"/>
    <property type="resolution" value="1.96 A"/>
    <property type="chains" value="A/C=23-292"/>
</dbReference>
<dbReference type="PDB" id="6PVD">
    <property type="method" value="X-ray"/>
    <property type="resolution" value="2.14 A"/>
    <property type="chains" value="A/C=23-292"/>
</dbReference>
<dbReference type="PDB" id="6W9U">
    <property type="method" value="X-ray"/>
    <property type="resolution" value="1.89 A"/>
    <property type="chains" value="A/C=23-292"/>
</dbReference>
<dbReference type="PDB" id="6W9V">
    <property type="method" value="X-ray"/>
    <property type="resolution" value="1.95 A"/>
    <property type="chains" value="A/C=23-292"/>
</dbReference>
<dbReference type="PDB" id="6XQP">
    <property type="method" value="X-ray"/>
    <property type="resolution" value="2.90 A"/>
    <property type="chains" value="A/C=23-292"/>
</dbReference>
<dbReference type="PDB" id="7LLI">
    <property type="method" value="X-ray"/>
    <property type="resolution" value="3.20 A"/>
    <property type="chains" value="A/C=23-292"/>
</dbReference>
<dbReference type="PDB" id="7LLJ">
    <property type="method" value="X-ray"/>
    <property type="resolution" value="3.15 A"/>
    <property type="chains" value="C/E=23-292"/>
</dbReference>
<dbReference type="PDB" id="7RNO">
    <property type="method" value="NMR"/>
    <property type="chains" value="A=23-204"/>
</dbReference>
<dbReference type="PDB" id="7UFJ">
    <property type="method" value="X-ray"/>
    <property type="resolution" value="2.50 A"/>
    <property type="chains" value="A/C=23-292"/>
</dbReference>
<dbReference type="PDB" id="7UMG">
    <property type="method" value="X-ray"/>
    <property type="resolution" value="2.40 A"/>
    <property type="chains" value="A=23-292"/>
</dbReference>
<dbReference type="PDB" id="7ZT2">
    <property type="method" value="X-ray"/>
    <property type="resolution" value="2.40 A"/>
    <property type="chains" value="A=23-292"/>
</dbReference>
<dbReference type="PDB" id="7ZT3">
    <property type="method" value="X-ray"/>
    <property type="resolution" value="2.40 A"/>
    <property type="chains" value="A=23-292"/>
</dbReference>
<dbReference type="PDB" id="7ZT4">
    <property type="method" value="X-ray"/>
    <property type="resolution" value="2.02 A"/>
    <property type="chains" value="A=23-292"/>
</dbReference>
<dbReference type="PDB" id="7ZT5">
    <property type="method" value="X-ray"/>
    <property type="resolution" value="2.09 A"/>
    <property type="chains" value="A=23-292"/>
</dbReference>
<dbReference type="PDB" id="7ZT7">
    <property type="method" value="X-ray"/>
    <property type="resolution" value="1.84 A"/>
    <property type="chains" value="A=23-292"/>
</dbReference>
<dbReference type="PDB" id="7ZT8">
    <property type="method" value="X-ray"/>
    <property type="resolution" value="2.29 A"/>
    <property type="chains" value="A=23-292"/>
</dbReference>
<dbReference type="PDB" id="7ZT9">
    <property type="method" value="X-ray"/>
    <property type="resolution" value="2.13 A"/>
    <property type="chains" value="A=23-292"/>
</dbReference>
<dbReference type="PDB" id="8BP6">
    <property type="method" value="X-ray"/>
    <property type="resolution" value="2.80 A"/>
    <property type="chains" value="A/B=23-291"/>
</dbReference>
<dbReference type="PDB" id="8Y6X">
    <property type="method" value="X-ray"/>
    <property type="resolution" value="3.40 A"/>
    <property type="chains" value="A=23-292"/>
</dbReference>
<dbReference type="PDB" id="9BTX">
    <property type="method" value="X-ray"/>
    <property type="resolution" value="2.05 A"/>
    <property type="chains" value="A/C=23-292"/>
</dbReference>
<dbReference type="PDB" id="9BTY">
    <property type="method" value="X-ray"/>
    <property type="resolution" value="2.85 A"/>
    <property type="chains" value="A/C=23-292"/>
</dbReference>
<dbReference type="PDB" id="9BTZ">
    <property type="method" value="X-ray"/>
    <property type="resolution" value="3.00 A"/>
    <property type="chains" value="A/C=23-292"/>
</dbReference>
<dbReference type="PDB" id="9BU0">
    <property type="method" value="X-ray"/>
    <property type="resolution" value="2.89 A"/>
    <property type="chains" value="A/C=23-292"/>
</dbReference>
<dbReference type="PDB" id="9CGR">
    <property type="method" value="X-ray"/>
    <property type="resolution" value="2.40 A"/>
    <property type="chains" value="A/C=23-292"/>
</dbReference>
<dbReference type="PDB" id="9CGS">
    <property type="method" value="X-ray"/>
    <property type="resolution" value="2.00 A"/>
    <property type="chains" value="A/C=23-292"/>
</dbReference>
<dbReference type="PDBsum" id="4GUP"/>
<dbReference type="PDBsum" id="4L4T"/>
<dbReference type="PDBsum" id="4L4V"/>
<dbReference type="PDBsum" id="4LCW"/>
<dbReference type="PDBsum" id="4NQC"/>
<dbReference type="PDBsum" id="4NQD"/>
<dbReference type="PDBsum" id="4NQE"/>
<dbReference type="PDBsum" id="4PJ5"/>
<dbReference type="PDBsum" id="4PJ7"/>
<dbReference type="PDBsum" id="4PJ8"/>
<dbReference type="PDBsum" id="4PJ9"/>
<dbReference type="PDBsum" id="4PJA"/>
<dbReference type="PDBsum" id="4PJB"/>
<dbReference type="PDBsum" id="4PJC"/>
<dbReference type="PDBsum" id="4PJD"/>
<dbReference type="PDBsum" id="4PJE"/>
<dbReference type="PDBsum" id="4PJF"/>
<dbReference type="PDBsum" id="4PJG"/>
<dbReference type="PDBsum" id="4PJH"/>
<dbReference type="PDBsum" id="4PJI"/>
<dbReference type="PDBsum" id="4PJX"/>
<dbReference type="PDBsum" id="5D5M"/>
<dbReference type="PDBsum" id="5D7I"/>
<dbReference type="PDBsum" id="5D7J"/>
<dbReference type="PDBsum" id="5D7L"/>
<dbReference type="PDBsum" id="5U16"/>
<dbReference type="PDBsum" id="5U17"/>
<dbReference type="PDBsum" id="5U1R"/>
<dbReference type="PDBsum" id="5U2V"/>
<dbReference type="PDBsum" id="5U6Q"/>
<dbReference type="PDBsum" id="5U72"/>
<dbReference type="PDBsum" id="6MWR"/>
<dbReference type="PDBsum" id="6PUC"/>
<dbReference type="PDBsum" id="6PUD"/>
<dbReference type="PDBsum" id="6PUE"/>
<dbReference type="PDBsum" id="6PUF"/>
<dbReference type="PDBsum" id="6PUG"/>
<dbReference type="PDBsum" id="6PUH"/>
<dbReference type="PDBsum" id="6PUI"/>
<dbReference type="PDBsum" id="6PUJ"/>
<dbReference type="PDBsum" id="6PUK"/>
<dbReference type="PDBsum" id="6PUL"/>
<dbReference type="PDBsum" id="6PUM"/>
<dbReference type="PDBsum" id="6PVC"/>
<dbReference type="PDBsum" id="6PVD"/>
<dbReference type="PDBsum" id="6W9U"/>
<dbReference type="PDBsum" id="6W9V"/>
<dbReference type="PDBsum" id="6XQP"/>
<dbReference type="PDBsum" id="7LLI"/>
<dbReference type="PDBsum" id="7LLJ"/>
<dbReference type="PDBsum" id="7RNO"/>
<dbReference type="PDBsum" id="7UFJ"/>
<dbReference type="PDBsum" id="7UMG"/>
<dbReference type="PDBsum" id="7ZT2"/>
<dbReference type="PDBsum" id="7ZT3"/>
<dbReference type="PDBsum" id="7ZT4"/>
<dbReference type="PDBsum" id="7ZT5"/>
<dbReference type="PDBsum" id="7ZT7"/>
<dbReference type="PDBsum" id="7ZT8"/>
<dbReference type="PDBsum" id="7ZT9"/>
<dbReference type="PDBsum" id="8BP6"/>
<dbReference type="PDBsum" id="8Y6X"/>
<dbReference type="PDBsum" id="9BTX"/>
<dbReference type="PDBsum" id="9BTY"/>
<dbReference type="PDBsum" id="9BTZ"/>
<dbReference type="PDBsum" id="9BU0"/>
<dbReference type="PDBsum" id="9CGR"/>
<dbReference type="PDBsum" id="9CGS"/>
<dbReference type="SMR" id="Q95460"/>
<dbReference type="BioGRID" id="109385">
    <property type="interactions" value="138"/>
</dbReference>
<dbReference type="DIP" id="DIP-59986N"/>
<dbReference type="FunCoup" id="Q95460">
    <property type="interactions" value="523"/>
</dbReference>
<dbReference type="IntAct" id="Q95460">
    <property type="interactions" value="55"/>
</dbReference>
<dbReference type="STRING" id="9606.ENSP00000477563"/>
<dbReference type="ChEMBL" id="CHEMBL5465401"/>
<dbReference type="DrugBank" id="DB00098">
    <property type="generic name" value="Antithymocyte immunoglobulin (rabbit)"/>
</dbReference>
<dbReference type="GlyCosmos" id="Q95460">
    <property type="glycosylation" value="1 site, No reported glycans"/>
</dbReference>
<dbReference type="GlyGen" id="Q95460">
    <property type="glycosylation" value="1 site, 1 N-linked glycan (1 site)"/>
</dbReference>
<dbReference type="iPTMnet" id="Q95460"/>
<dbReference type="PhosphoSitePlus" id="Q95460"/>
<dbReference type="BioMuta" id="MR1"/>
<dbReference type="DMDM" id="74751679"/>
<dbReference type="jPOST" id="Q95460"/>
<dbReference type="MassIVE" id="Q95460"/>
<dbReference type="PaxDb" id="9606-ENSP00000477563"/>
<dbReference type="PeptideAtlas" id="Q95460"/>
<dbReference type="ProteomicsDB" id="75731">
    <molecule id="Q95460-1"/>
</dbReference>
<dbReference type="ProteomicsDB" id="75732">
    <molecule id="Q95460-2"/>
</dbReference>
<dbReference type="ProteomicsDB" id="75733">
    <molecule id="Q95460-3"/>
</dbReference>
<dbReference type="ProteomicsDB" id="75734">
    <molecule id="Q95460-4"/>
</dbReference>
<dbReference type="ProteomicsDB" id="75735">
    <molecule id="Q95460-5"/>
</dbReference>
<dbReference type="Antibodypedia" id="34431">
    <property type="antibodies" value="202 antibodies from 26 providers"/>
</dbReference>
<dbReference type="DNASU" id="3140"/>
<dbReference type="Ensembl" id="ENST00000282990.10">
    <molecule id="Q95460-3"/>
    <property type="protein sequence ID" value="ENSP00000282990.6"/>
    <property type="gene ID" value="ENSG00000153029.16"/>
</dbReference>
<dbReference type="Ensembl" id="ENST00000367579.7">
    <molecule id="Q95460-2"/>
    <property type="protein sequence ID" value="ENSP00000356551.3"/>
    <property type="gene ID" value="ENSG00000153029.16"/>
</dbReference>
<dbReference type="Ensembl" id="ENST00000367580.6">
    <molecule id="Q95460-1"/>
    <property type="protein sequence ID" value="ENSP00000356552.5"/>
    <property type="gene ID" value="ENSG00000153029.16"/>
</dbReference>
<dbReference type="Ensembl" id="ENST00000434571.7">
    <molecule id="Q95460-5"/>
    <property type="protein sequence ID" value="ENSP00000388504.2"/>
    <property type="gene ID" value="ENSG00000153029.16"/>
</dbReference>
<dbReference type="Ensembl" id="ENST00000614012.5">
    <molecule id="Q95460-1"/>
    <property type="protein sequence ID" value="ENSP00000477563.1"/>
    <property type="gene ID" value="ENSG00000153029.16"/>
</dbReference>
<dbReference type="GeneID" id="3140"/>
<dbReference type="KEGG" id="hsa:3140"/>
<dbReference type="MANE-Select" id="ENST00000367580.6">
    <property type="protein sequence ID" value="ENSP00000356552.5"/>
    <property type="RefSeq nucleotide sequence ID" value="NM_001385161.1"/>
    <property type="RefSeq protein sequence ID" value="NP_001372090.1"/>
</dbReference>
<dbReference type="UCSC" id="uc001goq.2">
    <molecule id="Q95460-1"/>
    <property type="organism name" value="human"/>
</dbReference>
<dbReference type="AGR" id="HGNC:4975"/>
<dbReference type="CTD" id="3140"/>
<dbReference type="DisGeNET" id="3140"/>
<dbReference type="GeneCards" id="MR1"/>
<dbReference type="HGNC" id="HGNC:4975">
    <property type="gene designation" value="MR1"/>
</dbReference>
<dbReference type="HPA" id="ENSG00000153029">
    <property type="expression patterns" value="Low tissue specificity"/>
</dbReference>
<dbReference type="MalaCards" id="MR1"/>
<dbReference type="MIM" id="600764">
    <property type="type" value="gene"/>
</dbReference>
<dbReference type="neXtProt" id="NX_Q95460"/>
<dbReference type="OpenTargets" id="ENSG00000153029"/>
<dbReference type="PharmGKB" id="PA29309"/>
<dbReference type="VEuPathDB" id="HostDB:ENSG00000153029"/>
<dbReference type="eggNOG" id="ENOG502RQEK">
    <property type="taxonomic scope" value="Eukaryota"/>
</dbReference>
<dbReference type="GeneTree" id="ENSGT01120000271826"/>
<dbReference type="HOGENOM" id="CLU_047501_0_1_1"/>
<dbReference type="InParanoid" id="Q95460"/>
<dbReference type="OMA" id="PEISMMW"/>
<dbReference type="OrthoDB" id="8936120at2759"/>
<dbReference type="PAN-GO" id="Q95460">
    <property type="GO annotations" value="3 GO annotations based on evolutionary models"/>
</dbReference>
<dbReference type="PhylomeDB" id="Q95460"/>
<dbReference type="TreeFam" id="TF336617"/>
<dbReference type="PathwayCommons" id="Q95460"/>
<dbReference type="SignaLink" id="Q95460"/>
<dbReference type="BioGRID-ORCS" id="3140">
    <property type="hits" value="7 hits in 1158 CRISPR screens"/>
</dbReference>
<dbReference type="ChiTaRS" id="MR1">
    <property type="organism name" value="human"/>
</dbReference>
<dbReference type="EvolutionaryTrace" id="Q95460"/>
<dbReference type="GeneWiki" id="Major_histocompatibility_complex,_class_I-related"/>
<dbReference type="GenomeRNAi" id="3140"/>
<dbReference type="Pharos" id="Q95460">
    <property type="development level" value="Tbio"/>
</dbReference>
<dbReference type="PRO" id="PR:Q95460"/>
<dbReference type="Proteomes" id="UP000005640">
    <property type="component" value="Chromosome 1"/>
</dbReference>
<dbReference type="RNAct" id="Q95460">
    <property type="molecule type" value="protein"/>
</dbReference>
<dbReference type="Bgee" id="ENSG00000153029">
    <property type="expression patterns" value="Expressed in type B pancreatic cell and 182 other cell types or tissues"/>
</dbReference>
<dbReference type="GO" id="GO:0031901">
    <property type="term" value="C:early endosome membrane"/>
    <property type="evidence" value="ECO:0000314"/>
    <property type="project" value="UniProtKB"/>
</dbReference>
<dbReference type="GO" id="GO:0005783">
    <property type="term" value="C:endoplasmic reticulum"/>
    <property type="evidence" value="ECO:0000314"/>
    <property type="project" value="MGI"/>
</dbReference>
<dbReference type="GO" id="GO:0005789">
    <property type="term" value="C:endoplasmic reticulum membrane"/>
    <property type="evidence" value="ECO:0000314"/>
    <property type="project" value="UniProtKB"/>
</dbReference>
<dbReference type="GO" id="GO:0009897">
    <property type="term" value="C:external side of plasma membrane"/>
    <property type="evidence" value="ECO:0000318"/>
    <property type="project" value="GO_Central"/>
</dbReference>
<dbReference type="GO" id="GO:0005615">
    <property type="term" value="C:extracellular space"/>
    <property type="evidence" value="ECO:0000318"/>
    <property type="project" value="GO_Central"/>
</dbReference>
<dbReference type="GO" id="GO:0000139">
    <property type="term" value="C:Golgi membrane"/>
    <property type="evidence" value="ECO:0007669"/>
    <property type="project" value="UniProtKB-SubCell"/>
</dbReference>
<dbReference type="GO" id="GO:0031902">
    <property type="term" value="C:late endosome membrane"/>
    <property type="evidence" value="ECO:0000314"/>
    <property type="project" value="UniProtKB"/>
</dbReference>
<dbReference type="GO" id="GO:0042612">
    <property type="term" value="C:MHC class I protein complex"/>
    <property type="evidence" value="ECO:0007669"/>
    <property type="project" value="UniProtKB-KW"/>
</dbReference>
<dbReference type="GO" id="GO:0005886">
    <property type="term" value="C:plasma membrane"/>
    <property type="evidence" value="ECO:0000314"/>
    <property type="project" value="HPA"/>
</dbReference>
<dbReference type="GO" id="GO:0030881">
    <property type="term" value="F:beta-2-microglobulin binding"/>
    <property type="evidence" value="ECO:0000314"/>
    <property type="project" value="UniProtKB"/>
</dbReference>
<dbReference type="GO" id="GO:0032393">
    <property type="term" value="F:MHC class I receptor activity"/>
    <property type="evidence" value="ECO:0000304"/>
    <property type="project" value="UniProtKB"/>
</dbReference>
<dbReference type="GO" id="GO:0042608">
    <property type="term" value="F:T cell receptor binding"/>
    <property type="evidence" value="ECO:0000314"/>
    <property type="project" value="UniProtKB"/>
</dbReference>
<dbReference type="GO" id="GO:0019884">
    <property type="term" value="P:antigen processing and presentation of exogenous antigen"/>
    <property type="evidence" value="ECO:0000314"/>
    <property type="project" value="UniProtKB"/>
</dbReference>
<dbReference type="GO" id="GO:0002474">
    <property type="term" value="P:antigen processing and presentation of peptide antigen via MHC class I"/>
    <property type="evidence" value="ECO:0007669"/>
    <property type="project" value="UniProtKB-KW"/>
</dbReference>
<dbReference type="GO" id="GO:0050829">
    <property type="term" value="P:defense response to Gram-negative bacterium"/>
    <property type="evidence" value="ECO:0000314"/>
    <property type="project" value="UniProtKB"/>
</dbReference>
<dbReference type="GO" id="GO:0050830">
    <property type="term" value="P:defense response to Gram-positive bacterium"/>
    <property type="evidence" value="ECO:0000314"/>
    <property type="project" value="UniProtKB"/>
</dbReference>
<dbReference type="GO" id="GO:0006955">
    <property type="term" value="P:immune response"/>
    <property type="evidence" value="ECO:0000318"/>
    <property type="project" value="GO_Central"/>
</dbReference>
<dbReference type="GO" id="GO:0045087">
    <property type="term" value="P:innate immune response"/>
    <property type="evidence" value="ECO:0007669"/>
    <property type="project" value="UniProtKB-KW"/>
</dbReference>
<dbReference type="GO" id="GO:0002854">
    <property type="term" value="P:positive regulation of T cell mediated cytotoxicity directed against tumor cell target"/>
    <property type="evidence" value="ECO:0000314"/>
    <property type="project" value="UniProtKB"/>
</dbReference>
<dbReference type="GO" id="GO:0033077">
    <property type="term" value="P:T cell differentiation in thymus"/>
    <property type="evidence" value="ECO:0000250"/>
    <property type="project" value="UniProtKB"/>
</dbReference>
<dbReference type="CDD" id="cd07698">
    <property type="entry name" value="IgC1_MHC_I_alpha3"/>
    <property type="match status" value="1"/>
</dbReference>
<dbReference type="FunFam" id="3.30.500.10:FF:000001">
    <property type="entry name" value="H-2 class I histocompatibility antigen, alpha chain"/>
    <property type="match status" value="1"/>
</dbReference>
<dbReference type="FunFam" id="2.60.40.10:FF:000204">
    <property type="entry name" value="Major histocompatibility complex, class I-related protein"/>
    <property type="match status" value="1"/>
</dbReference>
<dbReference type="Gene3D" id="2.60.40.10">
    <property type="entry name" value="Immunoglobulins"/>
    <property type="match status" value="1"/>
</dbReference>
<dbReference type="Gene3D" id="3.30.500.10">
    <property type="entry name" value="MHC class I-like antigen recognition-like"/>
    <property type="match status" value="1"/>
</dbReference>
<dbReference type="InterPro" id="IPR007110">
    <property type="entry name" value="Ig-like_dom"/>
</dbReference>
<dbReference type="InterPro" id="IPR036179">
    <property type="entry name" value="Ig-like_dom_sf"/>
</dbReference>
<dbReference type="InterPro" id="IPR013783">
    <property type="entry name" value="Ig-like_fold"/>
</dbReference>
<dbReference type="InterPro" id="IPR003006">
    <property type="entry name" value="Ig/MHC_CS"/>
</dbReference>
<dbReference type="InterPro" id="IPR003597">
    <property type="entry name" value="Ig_C1-set"/>
</dbReference>
<dbReference type="InterPro" id="IPR050208">
    <property type="entry name" value="MHC_class-I_related"/>
</dbReference>
<dbReference type="InterPro" id="IPR011161">
    <property type="entry name" value="MHC_I-like_Ag-recog"/>
</dbReference>
<dbReference type="InterPro" id="IPR037055">
    <property type="entry name" value="MHC_I-like_Ag-recog_sf"/>
</dbReference>
<dbReference type="InterPro" id="IPR011162">
    <property type="entry name" value="MHC_I/II-like_Ag-recog"/>
</dbReference>
<dbReference type="InterPro" id="IPR001039">
    <property type="entry name" value="MHC_I_a_a1/a2"/>
</dbReference>
<dbReference type="PANTHER" id="PTHR16675:SF242">
    <property type="entry name" value="MAJOR HISTOCOMPATIBILITY COMPLEX CLASS I-RELATED GENE PROTEIN"/>
    <property type="match status" value="1"/>
</dbReference>
<dbReference type="PANTHER" id="PTHR16675">
    <property type="entry name" value="MHC CLASS I-RELATED"/>
    <property type="match status" value="1"/>
</dbReference>
<dbReference type="Pfam" id="PF07654">
    <property type="entry name" value="C1-set"/>
    <property type="match status" value="1"/>
</dbReference>
<dbReference type="Pfam" id="PF00129">
    <property type="entry name" value="MHC_I"/>
    <property type="match status" value="1"/>
</dbReference>
<dbReference type="PRINTS" id="PR01638">
    <property type="entry name" value="MHCCLASSI"/>
</dbReference>
<dbReference type="SMART" id="SM00407">
    <property type="entry name" value="IGc1"/>
    <property type="match status" value="1"/>
</dbReference>
<dbReference type="SUPFAM" id="SSF48726">
    <property type="entry name" value="Immunoglobulin"/>
    <property type="match status" value="1"/>
</dbReference>
<dbReference type="SUPFAM" id="SSF54452">
    <property type="entry name" value="MHC antigen-recognition domain"/>
    <property type="match status" value="1"/>
</dbReference>
<dbReference type="PROSITE" id="PS50835">
    <property type="entry name" value="IG_LIKE"/>
    <property type="match status" value="1"/>
</dbReference>
<dbReference type="PROSITE" id="PS00290">
    <property type="entry name" value="IG_MHC"/>
    <property type="match status" value="1"/>
</dbReference>
<accession>Q95460</accession>
<accession>A8K2V9</accession>
<accession>B4E3B1</accession>
<accession>O97985</accession>
<accession>O97986</accession>
<accession>Q53GM1</accession>
<accession>Q95HB8</accession>
<accession>Q9MY23</accession>
<accession>Q9NPL2</accession>
<accession>Q9TQB3</accession>
<accession>Q9TQB9</accession>
<accession>Q9TQK3</accession>
<reference key="1">
    <citation type="journal article" date="1995" name="Science">
        <title>A gene outside the human MHC related to classical HLA class I genes.</title>
        <authorList>
            <person name="Hashimoto K."/>
            <person name="Hirai M."/>
            <person name="Kurosawa Y."/>
        </authorList>
    </citation>
    <scope>NUCLEOTIDE SEQUENCE [MRNA] (ISOFORM 1)</scope>
    <scope>TISSUE SPECIFICITY</scope>
    <source>
        <tissue>Thymus</tissue>
    </source>
</reference>
<reference key="2">
    <citation type="journal article" date="2000" name="Tissue Antigens">
        <title>A study on the polymorphism of human MHC class I-related MR1 gene and identification of an MR1-like pseudogene.</title>
        <authorList>
            <person name="Parra-Cuadrado J.F."/>
            <person name="Navarro P."/>
            <person name="Mirones I."/>
            <person name="Setien F."/>
            <person name="Oteo M."/>
            <person name="Martinez-Naves E."/>
        </authorList>
    </citation>
    <scope>NUCLEOTIDE SEQUENCE [MRNA] (ISOFORM 1)</scope>
    <scope>POLYMORPHISM</scope>
    <source>
        <tissue>Peripheral blood</tissue>
    </source>
</reference>
<reference key="3">
    <citation type="journal article" date="2004" name="Nat. Genet.">
        <title>Complete sequencing and characterization of 21,243 full-length human cDNAs.</title>
        <authorList>
            <person name="Ota T."/>
            <person name="Suzuki Y."/>
            <person name="Nishikawa T."/>
            <person name="Otsuki T."/>
            <person name="Sugiyama T."/>
            <person name="Irie R."/>
            <person name="Wakamatsu A."/>
            <person name="Hayashi K."/>
            <person name="Sato H."/>
            <person name="Nagai K."/>
            <person name="Kimura K."/>
            <person name="Makita H."/>
            <person name="Sekine M."/>
            <person name="Obayashi M."/>
            <person name="Nishi T."/>
            <person name="Shibahara T."/>
            <person name="Tanaka T."/>
            <person name="Ishii S."/>
            <person name="Yamamoto J."/>
            <person name="Saito K."/>
            <person name="Kawai Y."/>
            <person name="Isono Y."/>
            <person name="Nakamura Y."/>
            <person name="Nagahari K."/>
            <person name="Murakami K."/>
            <person name="Yasuda T."/>
            <person name="Iwayanagi T."/>
            <person name="Wagatsuma M."/>
            <person name="Shiratori A."/>
            <person name="Sudo H."/>
            <person name="Hosoiri T."/>
            <person name="Kaku Y."/>
            <person name="Kodaira H."/>
            <person name="Kondo H."/>
            <person name="Sugawara M."/>
            <person name="Takahashi M."/>
            <person name="Kanda K."/>
            <person name="Yokoi T."/>
            <person name="Furuya T."/>
            <person name="Kikkawa E."/>
            <person name="Omura Y."/>
            <person name="Abe K."/>
            <person name="Kamihara K."/>
            <person name="Katsuta N."/>
            <person name="Sato K."/>
            <person name="Tanikawa M."/>
            <person name="Yamazaki M."/>
            <person name="Ninomiya K."/>
            <person name="Ishibashi T."/>
            <person name="Yamashita H."/>
            <person name="Murakawa K."/>
            <person name="Fujimori K."/>
            <person name="Tanai H."/>
            <person name="Kimata M."/>
            <person name="Watanabe M."/>
            <person name="Hiraoka S."/>
            <person name="Chiba Y."/>
            <person name="Ishida S."/>
            <person name="Ono Y."/>
            <person name="Takiguchi S."/>
            <person name="Watanabe S."/>
            <person name="Yosida M."/>
            <person name="Hotuta T."/>
            <person name="Kusano J."/>
            <person name="Kanehori K."/>
            <person name="Takahashi-Fujii A."/>
            <person name="Hara H."/>
            <person name="Tanase T.-O."/>
            <person name="Nomura Y."/>
            <person name="Togiya S."/>
            <person name="Komai F."/>
            <person name="Hara R."/>
            <person name="Takeuchi K."/>
            <person name="Arita M."/>
            <person name="Imose N."/>
            <person name="Musashino K."/>
            <person name="Yuuki H."/>
            <person name="Oshima A."/>
            <person name="Sasaki N."/>
            <person name="Aotsuka S."/>
            <person name="Yoshikawa Y."/>
            <person name="Matsunawa H."/>
            <person name="Ichihara T."/>
            <person name="Shiohata N."/>
            <person name="Sano S."/>
            <person name="Moriya S."/>
            <person name="Momiyama H."/>
            <person name="Satoh N."/>
            <person name="Takami S."/>
            <person name="Terashima Y."/>
            <person name="Suzuki O."/>
            <person name="Nakagawa S."/>
            <person name="Senoh A."/>
            <person name="Mizoguchi H."/>
            <person name="Goto Y."/>
            <person name="Shimizu F."/>
            <person name="Wakebe H."/>
            <person name="Hishigaki H."/>
            <person name="Watanabe T."/>
            <person name="Sugiyama A."/>
            <person name="Takemoto M."/>
            <person name="Kawakami B."/>
            <person name="Yamazaki M."/>
            <person name="Watanabe K."/>
            <person name="Kumagai A."/>
            <person name="Itakura S."/>
            <person name="Fukuzumi Y."/>
            <person name="Fujimori Y."/>
            <person name="Komiyama M."/>
            <person name="Tashiro H."/>
            <person name="Tanigami A."/>
            <person name="Fujiwara T."/>
            <person name="Ono T."/>
            <person name="Yamada K."/>
            <person name="Fujii Y."/>
            <person name="Ozaki K."/>
            <person name="Hirao M."/>
            <person name="Ohmori Y."/>
            <person name="Kawabata A."/>
            <person name="Hikiji T."/>
            <person name="Kobatake N."/>
            <person name="Inagaki H."/>
            <person name="Ikema Y."/>
            <person name="Okamoto S."/>
            <person name="Okitani R."/>
            <person name="Kawakami T."/>
            <person name="Noguchi S."/>
            <person name="Itoh T."/>
            <person name="Shigeta K."/>
            <person name="Senba T."/>
            <person name="Matsumura K."/>
            <person name="Nakajima Y."/>
            <person name="Mizuno T."/>
            <person name="Morinaga M."/>
            <person name="Sasaki M."/>
            <person name="Togashi T."/>
            <person name="Oyama M."/>
            <person name="Hata H."/>
            <person name="Watanabe M."/>
            <person name="Komatsu T."/>
            <person name="Mizushima-Sugano J."/>
            <person name="Satoh T."/>
            <person name="Shirai Y."/>
            <person name="Takahashi Y."/>
            <person name="Nakagawa K."/>
            <person name="Okumura K."/>
            <person name="Nagase T."/>
            <person name="Nomura N."/>
            <person name="Kikuchi H."/>
            <person name="Masuho Y."/>
            <person name="Yamashita R."/>
            <person name="Nakai K."/>
            <person name="Yada T."/>
            <person name="Nakamura Y."/>
            <person name="Ohara O."/>
            <person name="Isogai T."/>
            <person name="Sugano S."/>
        </authorList>
    </citation>
    <scope>NUCLEOTIDE SEQUENCE [LARGE SCALE MRNA] (ISOFORMS 3 AND 5)</scope>
    <source>
        <tissue>Tongue</tissue>
        <tissue>Uterus</tissue>
    </source>
</reference>
<reference key="4">
    <citation type="submission" date="2005-04" db="EMBL/GenBank/DDBJ databases">
        <authorList>
            <person name="Suzuki Y."/>
            <person name="Sugano S."/>
            <person name="Totoki Y."/>
            <person name="Toyoda A."/>
            <person name="Takeda T."/>
            <person name="Sakaki Y."/>
            <person name="Tanaka A."/>
            <person name="Yokoyama S."/>
        </authorList>
    </citation>
    <scope>NUCLEOTIDE SEQUENCE [LARGE SCALE MRNA] (ISOFORM 1)</scope>
    <source>
        <tissue>Kidney proximal tubule</tissue>
    </source>
</reference>
<reference key="5">
    <citation type="journal article" date="2006" name="Nature">
        <title>The DNA sequence and biological annotation of human chromosome 1.</title>
        <authorList>
            <person name="Gregory S.G."/>
            <person name="Barlow K.F."/>
            <person name="McLay K.E."/>
            <person name="Kaul R."/>
            <person name="Swarbreck D."/>
            <person name="Dunham A."/>
            <person name="Scott C.E."/>
            <person name="Howe K.L."/>
            <person name="Woodfine K."/>
            <person name="Spencer C.C.A."/>
            <person name="Jones M.C."/>
            <person name="Gillson C."/>
            <person name="Searle S."/>
            <person name="Zhou Y."/>
            <person name="Kokocinski F."/>
            <person name="McDonald L."/>
            <person name="Evans R."/>
            <person name="Phillips K."/>
            <person name="Atkinson A."/>
            <person name="Cooper R."/>
            <person name="Jones C."/>
            <person name="Hall R.E."/>
            <person name="Andrews T.D."/>
            <person name="Lloyd C."/>
            <person name="Ainscough R."/>
            <person name="Almeida J.P."/>
            <person name="Ambrose K.D."/>
            <person name="Anderson F."/>
            <person name="Andrew R.W."/>
            <person name="Ashwell R.I.S."/>
            <person name="Aubin K."/>
            <person name="Babbage A.K."/>
            <person name="Bagguley C.L."/>
            <person name="Bailey J."/>
            <person name="Beasley H."/>
            <person name="Bethel G."/>
            <person name="Bird C.P."/>
            <person name="Bray-Allen S."/>
            <person name="Brown J.Y."/>
            <person name="Brown A.J."/>
            <person name="Buckley D."/>
            <person name="Burton J."/>
            <person name="Bye J."/>
            <person name="Carder C."/>
            <person name="Chapman J.C."/>
            <person name="Clark S.Y."/>
            <person name="Clarke G."/>
            <person name="Clee C."/>
            <person name="Cobley V."/>
            <person name="Collier R.E."/>
            <person name="Corby N."/>
            <person name="Coville G.J."/>
            <person name="Davies J."/>
            <person name="Deadman R."/>
            <person name="Dunn M."/>
            <person name="Earthrowl M."/>
            <person name="Ellington A.G."/>
            <person name="Errington H."/>
            <person name="Frankish A."/>
            <person name="Frankland J."/>
            <person name="French L."/>
            <person name="Garner P."/>
            <person name="Garnett J."/>
            <person name="Gay L."/>
            <person name="Ghori M.R.J."/>
            <person name="Gibson R."/>
            <person name="Gilby L.M."/>
            <person name="Gillett W."/>
            <person name="Glithero R.J."/>
            <person name="Grafham D.V."/>
            <person name="Griffiths C."/>
            <person name="Griffiths-Jones S."/>
            <person name="Grocock R."/>
            <person name="Hammond S."/>
            <person name="Harrison E.S.I."/>
            <person name="Hart E."/>
            <person name="Haugen E."/>
            <person name="Heath P.D."/>
            <person name="Holmes S."/>
            <person name="Holt K."/>
            <person name="Howden P.J."/>
            <person name="Hunt A.R."/>
            <person name="Hunt S.E."/>
            <person name="Hunter G."/>
            <person name="Isherwood J."/>
            <person name="James R."/>
            <person name="Johnson C."/>
            <person name="Johnson D."/>
            <person name="Joy A."/>
            <person name="Kay M."/>
            <person name="Kershaw J.K."/>
            <person name="Kibukawa M."/>
            <person name="Kimberley A.M."/>
            <person name="King A."/>
            <person name="Knights A.J."/>
            <person name="Lad H."/>
            <person name="Laird G."/>
            <person name="Lawlor S."/>
            <person name="Leongamornlert D.A."/>
            <person name="Lloyd D.M."/>
            <person name="Loveland J."/>
            <person name="Lovell J."/>
            <person name="Lush M.J."/>
            <person name="Lyne R."/>
            <person name="Martin S."/>
            <person name="Mashreghi-Mohammadi M."/>
            <person name="Matthews L."/>
            <person name="Matthews N.S.W."/>
            <person name="McLaren S."/>
            <person name="Milne S."/>
            <person name="Mistry S."/>
            <person name="Moore M.J.F."/>
            <person name="Nickerson T."/>
            <person name="O'Dell C.N."/>
            <person name="Oliver K."/>
            <person name="Palmeiri A."/>
            <person name="Palmer S.A."/>
            <person name="Parker A."/>
            <person name="Patel D."/>
            <person name="Pearce A.V."/>
            <person name="Peck A.I."/>
            <person name="Pelan S."/>
            <person name="Phelps K."/>
            <person name="Phillimore B.J."/>
            <person name="Plumb R."/>
            <person name="Rajan J."/>
            <person name="Raymond C."/>
            <person name="Rouse G."/>
            <person name="Saenphimmachak C."/>
            <person name="Sehra H.K."/>
            <person name="Sheridan E."/>
            <person name="Shownkeen R."/>
            <person name="Sims S."/>
            <person name="Skuce C.D."/>
            <person name="Smith M."/>
            <person name="Steward C."/>
            <person name="Subramanian S."/>
            <person name="Sycamore N."/>
            <person name="Tracey A."/>
            <person name="Tromans A."/>
            <person name="Van Helmond Z."/>
            <person name="Wall M."/>
            <person name="Wallis J.M."/>
            <person name="White S."/>
            <person name="Whitehead S.L."/>
            <person name="Wilkinson J.E."/>
            <person name="Willey D.L."/>
            <person name="Williams H."/>
            <person name="Wilming L."/>
            <person name="Wray P.W."/>
            <person name="Wu Z."/>
            <person name="Coulson A."/>
            <person name="Vaudin M."/>
            <person name="Sulston J.E."/>
            <person name="Durbin R.M."/>
            <person name="Hubbard T."/>
            <person name="Wooster R."/>
            <person name="Dunham I."/>
            <person name="Carter N.P."/>
            <person name="McVean G."/>
            <person name="Ross M.T."/>
            <person name="Harrow J."/>
            <person name="Olson M.V."/>
            <person name="Beck S."/>
            <person name="Rogers J."/>
            <person name="Bentley D.R."/>
        </authorList>
    </citation>
    <scope>NUCLEOTIDE SEQUENCE [LARGE SCALE GENOMIC DNA]</scope>
</reference>
<reference key="6">
    <citation type="submission" date="2005-07" db="EMBL/GenBank/DDBJ databases">
        <authorList>
            <person name="Mural R.J."/>
            <person name="Istrail S."/>
            <person name="Sutton G.G."/>
            <person name="Florea L."/>
            <person name="Halpern A.L."/>
            <person name="Mobarry C.M."/>
            <person name="Lippert R."/>
            <person name="Walenz B."/>
            <person name="Shatkay H."/>
            <person name="Dew I."/>
            <person name="Miller J.R."/>
            <person name="Flanigan M.J."/>
            <person name="Edwards N.J."/>
            <person name="Bolanos R."/>
            <person name="Fasulo D."/>
            <person name="Halldorsson B.V."/>
            <person name="Hannenhalli S."/>
            <person name="Turner R."/>
            <person name="Yooseph S."/>
            <person name="Lu F."/>
            <person name="Nusskern D.R."/>
            <person name="Shue B.C."/>
            <person name="Zheng X.H."/>
            <person name="Zhong F."/>
            <person name="Delcher A.L."/>
            <person name="Huson D.H."/>
            <person name="Kravitz S.A."/>
            <person name="Mouchard L."/>
            <person name="Reinert K."/>
            <person name="Remington K.A."/>
            <person name="Clark A.G."/>
            <person name="Waterman M.S."/>
            <person name="Eichler E.E."/>
            <person name="Adams M.D."/>
            <person name="Hunkapiller M.W."/>
            <person name="Myers E.W."/>
            <person name="Venter J.C."/>
        </authorList>
    </citation>
    <scope>NUCLEOTIDE SEQUENCE [LARGE SCALE GENOMIC DNA]</scope>
</reference>
<reference key="7">
    <citation type="journal article" date="2004" name="Genome Res.">
        <title>The status, quality, and expansion of the NIH full-length cDNA project: the Mammalian Gene Collection (MGC).</title>
        <authorList>
            <consortium name="The MGC Project Team"/>
        </authorList>
    </citation>
    <scope>NUCLEOTIDE SEQUENCE [LARGE SCALE MRNA] (ISOFORM 2)</scope>
    <source>
        <tissue>Testis</tissue>
    </source>
</reference>
<reference key="8">
    <citation type="journal article" date="1998" name="J. Immunol.">
        <title>Genomics, isoforms, expression, and phylogeny of the MHC class I-related MR1 gene.</title>
        <authorList>
            <person name="Riegert P."/>
            <person name="Wanner V."/>
            <person name="Bahram S."/>
        </authorList>
    </citation>
    <scope>NUCLEOTIDE SEQUENCE [GENOMIC DNA] OF 1-11</scope>
    <scope>NUCLEOTIDE SEQUENCE [MRNA] OF 5-341 (ISOFORM 3)</scope>
    <scope>NUCLEOTIDE SEQUENCE [MRNA] OF 6-229 (ISOFORM 4)</scope>
    <scope>ALTERNATIVE SPLICING</scope>
    <scope>TISSUE SPECIFICITY</scope>
</reference>
<reference key="9">
    <citation type="journal article" date="1998" name="Biochem. Biophys. Res. Commun.">
        <title>Expanded genomic organization of conserved mammalian MHC class I-related genes, human MR1 and its murine ortholog.</title>
        <authorList>
            <person name="Yamaguchi H."/>
            <person name="Kurosawa Y."/>
            <person name="Hashimoto K."/>
        </authorList>
    </citation>
    <scope>NUCLEOTIDE SEQUENCE [GENOMIC DNA] OF 8-341</scope>
    <source>
        <tissue>Placenta</tissue>
    </source>
</reference>
<reference key="10">
    <citation type="journal article" date="2021" name="HLA">
        <title>MR1 encompasses at least six allele groups with coding region alterations.</title>
        <authorList>
            <person name="Rozemuller E."/>
            <person name="Eckle S.B.G."/>
            <person name="McLaughlin I."/>
            <person name="Penning M."/>
            <person name="Mulder W."/>
            <person name="de Bruin H."/>
            <person name="van Wageningen S."/>
        </authorList>
    </citation>
    <scope>NUCLEOTIDE SEQUENCE [GENOMIC DNA] OF 24-341 (ALLELES MR1*01; MR1*02; MR1*03; MR1*04; MR1*05 AND MR1*06)</scope>
    <scope>POLYMORPHISM</scope>
</reference>
<reference key="11">
    <citation type="submission" date="2000-01" db="EMBL/GenBank/DDBJ databases">
        <title>Unrelated expression patterns of MHC class Ia, Ib and TCRA molecules.</title>
        <authorList>
            <person name="Han M."/>
            <person name="Robinson M.A."/>
        </authorList>
    </citation>
    <scope>NUCLEOTIDE SEQUENCE [GENOMIC DNA] OF 23-109</scope>
    <scope>VARIANT ARG-39</scope>
</reference>
<reference key="12">
    <citation type="journal article" date="2003" name="J. Immunol.">
        <title>Biochemical features of the MHC-related protein 1 consistent with an immunological function.</title>
        <authorList>
            <person name="Miley M.J."/>
            <person name="Truscott S.M."/>
            <person name="Yu Y.Y."/>
            <person name="Gilfillan S."/>
            <person name="Fremont D.H."/>
            <person name="Hansen T.H."/>
            <person name="Lybarger L."/>
        </authorList>
    </citation>
    <scope>SIGNAL SEQUENCE CLEAVAGE SITE</scope>
    <scope>GLYCOSYLATION AT ASN-107</scope>
    <scope>SUBCELLULAR LOCATION</scope>
    <scope>SUBUNIT</scope>
</reference>
<reference key="13">
    <citation type="journal article" date="2008" name="Biochem. Biophys. Res. Commun.">
        <title>Novel MHC class I-related molecule MR1 affects MHC class I expression in 293T cells.</title>
        <authorList>
            <person name="Aldemir H."/>
        </authorList>
    </citation>
    <scope>SUBCELLULAR LOCATION</scope>
</reference>
<reference key="14">
    <citation type="journal article" date="2009" name="Histol. Histopathol.">
        <title>The MHC-related protein 1 (MR1) is expressed by a subpopulation of CD38+, IgA+ cells in the human intestinal mucosa.</title>
        <authorList>
            <person name="Gozalbo-Lopez B."/>
            <person name="Gomez del Moral M."/>
            <person name="Campos-Martin Y."/>
            <person name="Setien F."/>
            <person name="Martin P."/>
            <person name="Bellas C."/>
            <person name="Regueiro J.R."/>
            <person name="Martinez-Naves E."/>
        </authorList>
    </citation>
    <scope>TISSUE SPECIFICITY</scope>
</reference>
<reference key="15">
    <citation type="journal article" date="2009" name="Proc. Natl. Acad. Sci. U.S.A.">
        <title>MR1 antigen presentation to mucosal-associated invariant T cells was highly conserved in evolution.</title>
        <authorList>
            <person name="Huang S."/>
            <person name="Martin E."/>
            <person name="Kim S."/>
            <person name="Yu L."/>
            <person name="Soudais C."/>
            <person name="Fremont D.H."/>
            <person name="Lantz O."/>
            <person name="Hansen T.H."/>
        </authorList>
    </citation>
    <scope>FUNCTION</scope>
    <scope>MUTAGENESIS OF GLN-169</scope>
</reference>
<reference key="16">
    <citation type="journal article" date="2010" name="Nat. Immunol.">
        <title>Antimicrobial activity of mucosal-associated invariant T cells.</title>
        <authorList>
            <person name="Le Bourhis L."/>
            <person name="Martin E."/>
            <person name="Peguillet I."/>
            <person name="Guihot A."/>
            <person name="Froux N."/>
            <person name="Core M."/>
            <person name="Levy E."/>
            <person name="Dusseaux M."/>
            <person name="Meyssonnier V."/>
            <person name="Premel V."/>
            <person name="Ngo C."/>
            <person name="Riteau B."/>
            <person name="Duban L."/>
            <person name="Robert D."/>
            <person name="Huang S."/>
            <person name="Rottman M."/>
            <person name="Soudais C."/>
            <person name="Lantz O."/>
        </authorList>
    </citation>
    <scope>FUNCTION</scope>
</reference>
<reference key="17">
    <citation type="journal article" date="2013" name="Eur. J. Immunol.">
        <title>MR1B, a natural spliced isoform of the MHC-related 1 protein, is expressed as homodimers at the cell surface and activates MAIT cells.</title>
        <authorList>
            <person name="Lion J."/>
            <person name="Debuysscher V."/>
            <person name="Wlodarczyk A."/>
            <person name="Hodroge A."/>
            <person name="Serriari N.E."/>
            <person name="Choteau L."/>
            <person name="Ouled-haddou H."/>
            <person name="Plistat M."/>
            <person name="Lassoued K."/>
            <person name="Lantz O."/>
            <person name="Treiner E."/>
        </authorList>
    </citation>
    <scope>FUNCTION</scope>
    <scope>SUBCELLULAR LOCATION (ISOFORMS 1 AND 3)</scope>
    <scope>SUBUNIT (ISOFORM 3)</scope>
</reference>
<reference key="18">
    <citation type="journal article" date="2013" name="Mucosal Immunol.">
        <title>Human thymic MR1-restricted MAIT cells are innate pathogen-reactive effectors that adapt following thymic egress.</title>
        <authorList>
            <person name="Gold M.C."/>
            <person name="Eid T."/>
            <person name="Smyk-Pearson S."/>
            <person name="Eberling Y."/>
            <person name="Swarbrick G.M."/>
            <person name="Langley S.M."/>
            <person name="Streeter P.R."/>
            <person name="Lewinsohn D.A."/>
            <person name="Lewinsohn D.M."/>
        </authorList>
    </citation>
    <scope>FUNCTION</scope>
    <scope>TISSUE SPECIFICITY</scope>
</reference>
<reference key="19">
    <citation type="journal article" date="2016" name="Nat. Commun.">
        <title>Human TRAV1-2-negative MR1-restricted T cells detect S. pyogenes and alternatives to MAIT riboflavin-based antigens.</title>
        <authorList>
            <person name="Meermeier E.W."/>
            <person name="Laugel B.F."/>
            <person name="Sewell A.K."/>
            <person name="Corbett A.J."/>
            <person name="Rossjohn J."/>
            <person name="McCluskey J."/>
            <person name="Harriff M.J."/>
            <person name="Franks T."/>
            <person name="Gold M.C."/>
            <person name="Lewinsohn D.M."/>
        </authorList>
    </citation>
    <scope>FUNCTION</scope>
</reference>
<reference key="20">
    <citation type="journal article" date="2016" name="Nat. Immunol.">
        <title>The intracellular pathway for the presentation of vitamin B-related antigens by the antigen-presenting molecule MR1.</title>
        <authorList>
            <person name="McWilliam H.E."/>
            <person name="Eckle S.B."/>
            <person name="Theodossis A."/>
            <person name="Liu L."/>
            <person name="Chen Z."/>
            <person name="Wubben J.M."/>
            <person name="Fairlie D.P."/>
            <person name="Strugnell R.A."/>
            <person name="Mintern J.D."/>
            <person name="McCluskey J."/>
            <person name="Rossjohn J."/>
            <person name="Villadangos J.A."/>
        </authorList>
    </citation>
    <scope>INTERACTION WITH B2M AND VITAMIN B METABOLITE</scope>
    <scope>SUBCELLULAR LOCATION</scope>
    <scope>TISSUE SPECIFICITY</scope>
    <scope>GLYCOSYLATION</scope>
    <scope>MUTAGENESIS OF LYS-65</scope>
</reference>
<reference key="21">
    <citation type="journal article" date="2019" name="Nat. Commun.">
        <title>Diverse MR1-restricted T cells in mice and humans.</title>
        <authorList>
            <person name="Koay H.F."/>
            <person name="Gherardin N.A."/>
            <person name="Xu C."/>
            <person name="Seneviratna R."/>
            <person name="Zhao Z."/>
            <person name="Chen Z."/>
            <person name="Fairlie D.P."/>
            <person name="McCluskey J."/>
            <person name="Pellicci D.G."/>
            <person name="Uldrich A.P."/>
            <person name="Godfrey D.I."/>
        </authorList>
    </citation>
    <scope>FUNCTION</scope>
</reference>
<reference key="22">
    <citation type="journal article" date="2020" name="Cell Rep.">
        <title>Virus-Mediated Suppression of the Antigen Presentation Molecule MR1.</title>
        <authorList>
            <person name="McSharry B.P."/>
            <person name="Samer C."/>
            <person name="McWilliam H.E.G."/>
            <person name="Ashley C.L."/>
            <person name="Yee M.B."/>
            <person name="Steain M."/>
            <person name="Liu L."/>
            <person name="Fairlie D.P."/>
            <person name="Kinchington P.R."/>
            <person name="McCluskey J."/>
            <person name="Abendroth A."/>
            <person name="Villadangos J.A."/>
            <person name="Rossjohn J."/>
            <person name="Slobedman B."/>
        </authorList>
    </citation>
    <scope>INDUCTION (MICROBIAL INFECTION)</scope>
</reference>
<reference key="23">
    <citation type="journal article" date="2020" name="Nat. Immunol.">
        <title>Genome-wide CRISPR-Cas9 screening reveals ubiquitous T cell cancer targeting via the monomorphic MHC class I-related protein MR1.</title>
        <authorList>
            <person name="Crowther M.D."/>
            <person name="Dolton G."/>
            <person name="Legut M."/>
            <person name="Caillaud M.E."/>
            <person name="Lloyd A."/>
            <person name="Attaf M."/>
            <person name="Galloway S.A.E."/>
            <person name="Rius C."/>
            <person name="Farrell C.P."/>
            <person name="Szomolay B."/>
            <person name="Ager A."/>
            <person name="Parker A.L."/>
            <person name="Fuller A."/>
            <person name="Donia M."/>
            <person name="McCluskey J."/>
            <person name="Rossjohn J."/>
            <person name="Svane I.M."/>
            <person name="Phillips J.D."/>
            <person name="Sewell A.K."/>
        </authorList>
    </citation>
    <scope>FUNCTION</scope>
    <scope>MUTAGENESIS OF LYS-65</scope>
</reference>
<reference key="24">
    <citation type="journal article" date="2020" name="Proc. Natl. Acad. Sci. U.S.A.">
        <title>Endoplasmic reticulum chaperones stabilize ligand-receptive MR1 molecules for efficient presentation of metabolite antigens.</title>
        <authorList>
            <person name="McWilliam H.E.G."/>
            <person name="Mak J.Y.W."/>
            <person name="Awad W."/>
            <person name="Zorkau M."/>
            <person name="Cruz-Gomez S."/>
            <person name="Lim H.J."/>
            <person name="Yan Y."/>
            <person name="Wormald S."/>
            <person name="Dagley L.F."/>
            <person name="Eckle S.B.G."/>
            <person name="Corbett A.J."/>
            <person name="Liu H."/>
            <person name="Li S."/>
            <person name="Reddiex S.J.J."/>
            <person name="Mintern J.D."/>
            <person name="Liu L."/>
            <person name="McCluskey J."/>
            <person name="Rossjohn J."/>
            <person name="Fairlie D.P."/>
            <person name="Villadangos J.A."/>
        </authorList>
    </citation>
    <scope>FUNCTION</scope>
    <scope>INTERACTION WITH TAPBP</scope>
    <scope>SUBUNIT</scope>
    <scope>SUBCELLULAR LOCATION</scope>
</reference>
<reference key="25">
    <citation type="journal article" date="2024" name="Front. Oncol.">
        <title>Conserved allomorphs of MR1 drive the specificity of MR1-restricted TCRs.</title>
        <authorList>
            <person name="Cornforth T.V."/>
            <person name="Moyo N."/>
            <person name="Cole S."/>
            <person name="Lam E.P.S."/>
            <person name="Lobry T."/>
            <person name="Wolchinsky R."/>
            <person name="Lloyd A."/>
            <person name="Ward K."/>
            <person name="Denham E.M."/>
            <person name="Masi G."/>
            <person name="Qing Yun P.T."/>
            <person name="Moore C."/>
            <person name="Dhaouadi S."/>
            <person name="Besra G.S."/>
            <person name="Veerapen N."/>
            <person name="Illing P.T."/>
            <person name="Vivian J.P."/>
            <person name="Raynes J.M."/>
            <person name="Le Nours J."/>
            <person name="Purcell A.W."/>
            <person name="Kundu S."/>
            <person name="Silk J.D."/>
            <person name="Williams L."/>
            <person name="Papa S."/>
            <person name="Rossjohn J."/>
            <person name="Howie D."/>
            <person name="Dukes J."/>
        </authorList>
    </citation>
    <scope>FUNCTION (ALLELE MR1*04)</scope>
    <scope>POLYMORPHISM</scope>
</reference>
<reference key="26">
    <citation type="journal article" date="2012" name="Nature">
        <title>MR1 presents microbial vitamin B metabolites to MAIT cells.</title>
        <authorList>
            <person name="Kjer-Nielsen L."/>
            <person name="Patel O."/>
            <person name="Corbett A.J."/>
            <person name="Le Nours J."/>
            <person name="Meehan B."/>
            <person name="Liu L."/>
            <person name="Bhati M."/>
            <person name="Chen Z."/>
            <person name="Kostenko L."/>
            <person name="Reantragoon R."/>
            <person name="Williamson N.A."/>
            <person name="Purcell A.W."/>
            <person name="Dudek N.L."/>
            <person name="McConville M.J."/>
            <person name="O'Hair R.A."/>
            <person name="Khairallah G.N."/>
            <person name="Godfrey D.I."/>
            <person name="Fairlie D.P."/>
            <person name="Rossjohn J."/>
            <person name="McCluskey J."/>
        </authorList>
    </citation>
    <scope>X-RAY CRYSTALLOGRAPHY (3.2 ANGSTROMS) OF 23-292 IN COMPLEX WITH B2M AND METABOLITE ANTIGEN</scope>
    <scope>DISULFIDE BONDS</scope>
    <scope>FUNCTION</scope>
    <scope>MUTAGENESIS OF LYS-65</scope>
</reference>
<reference key="27">
    <citation type="journal article" date="2013" name="J. Exp. Med.">
        <title>Antigen-loaded MR1 tetramers define T cell receptor heterogeneity in mucosal-associated invariant T cells.</title>
        <authorList>
            <person name="Reantragoon R."/>
            <person name="Corbett A.J."/>
            <person name="Sakala I.G."/>
            <person name="Gherardin N.A."/>
            <person name="Furness J.B."/>
            <person name="Chen Z."/>
            <person name="Eckle S.B."/>
            <person name="Uldrich A.P."/>
            <person name="Birkinshaw R.W."/>
            <person name="Patel O."/>
            <person name="Kostenko L."/>
            <person name="Meehan B."/>
            <person name="Kedzierska K."/>
            <person name="Liu L."/>
            <person name="Fairlie D.P."/>
            <person name="Hansen T.H."/>
            <person name="Godfrey D.I."/>
            <person name="Rossjohn J."/>
            <person name="McCluskey J."/>
            <person name="Kjer-Nielsen L."/>
        </authorList>
    </citation>
    <scope>X-RAY CRYSTALLOGRAPHY (2.40 ANGSTROMS) OF 23-292 IN COMPLEX WITH B2M AND METABOLITE ANTIGEN</scope>
    <scope>ANTIGEN-BINDING SITES</scope>
    <scope>FUNCTION</scope>
    <scope>MUTAGENESIS OF LYS-65</scope>
</reference>
<reference key="28">
    <citation type="journal article" date="2013" name="Nat. Commun.">
        <title>Recognition of vitamin B metabolites by mucosal-associated invariant T cells.</title>
        <authorList>
            <person name="Patel O."/>
            <person name="Kjer-Nielsen L."/>
            <person name="Le Nours J."/>
            <person name="Eckle S.B."/>
            <person name="Birkinshaw R."/>
            <person name="Beddoe T."/>
            <person name="Corbett A.J."/>
            <person name="Liu L."/>
            <person name="Miles J.J."/>
            <person name="Meehan B."/>
            <person name="Reantragoon R."/>
            <person name="Sandoval-Romero M.L."/>
            <person name="Sullivan L.C."/>
            <person name="Brooks A.G."/>
            <person name="Chen Z."/>
            <person name="Fairlie D.P."/>
            <person name="McCluskey J."/>
            <person name="Rossjohn J."/>
        </authorList>
    </citation>
    <scope>X-RAY CRYSTALLOGRAPHY (1.90 ANGSTROMS) OF 23-292 IN COMPLEX WITH B2M AND METABOLITE ANTIGEN</scope>
    <scope>ANTIGEN-BINDING SITES</scope>
    <scope>DOMAIN</scope>
    <scope>INTERACTION WITH TCR</scope>
    <scope>FUNCTION</scope>
    <scope>ACTIVITY REGULATION</scope>
</reference>
<reference key="29">
    <citation type="journal article" date="2014" name="Nature">
        <title>T-cell activation by transitory neo-antigens derived from distinct microbial pathways.</title>
        <authorList>
            <person name="Corbett A.J."/>
            <person name="Eckle S.B."/>
            <person name="Birkinshaw R.W."/>
            <person name="Liu L."/>
            <person name="Patel O."/>
            <person name="Mahony J."/>
            <person name="Chen Z."/>
            <person name="Reantragoon R."/>
            <person name="Meehan B."/>
            <person name="Cao H."/>
            <person name="Williamson N.A."/>
            <person name="Strugnell R.A."/>
            <person name="Van Sinderen D."/>
            <person name="Mak J.Y."/>
            <person name="Fairlie D.P."/>
            <person name="Kjer-Nielsen L."/>
            <person name="Rossjohn J."/>
            <person name="McCluskey J."/>
        </authorList>
    </citation>
    <scope>X-RAY CRYSTALLOGRAPHY (2.10 ANGSTROMS) OF 23-292 IN COMPLEX WITH B2M AND METABOLITE ANTIGEN</scope>
    <scope>DISULFIDE BOND</scope>
    <scope>ANTIGEN-BINDING SITES</scope>
    <scope>DOMAIN</scope>
    <scope>FUNCTION</scope>
    <scope>INTERACTION WITH TCR</scope>
</reference>
<reference key="30">
    <citation type="journal article" date="2016" name="Immunity">
        <title>Diversity of T Cells Restricted by the MHC Class I-Related Molecule MR1 Facilitates Differential Antigen Recognition.</title>
        <authorList>
            <person name="Gherardin N.A."/>
            <person name="Keller A.N."/>
            <person name="Woolley R.E."/>
            <person name="Le Nours J."/>
            <person name="Ritchie D.S."/>
            <person name="Neeson P.J."/>
            <person name="Birkinshaw R.W."/>
            <person name="Eckle S.B.G."/>
            <person name="Waddington J.N."/>
            <person name="Liu L."/>
            <person name="Fairlie D.P."/>
            <person name="Uldrich A.P."/>
            <person name="Pellicci D.G."/>
            <person name="McCluskey J."/>
            <person name="Godfrey D.I."/>
            <person name="Rossjohn J."/>
        </authorList>
    </citation>
    <scope>X-RAY CRYSTALLOGRAPHY (1.97 ANGSTROMS) OF 23-292 IN COMPLEX WITH B2M AND METABOLITE ANTIGEN</scope>
    <scope>DISULFIDE BOND</scope>
    <scope>ANTIGEN-BINDING SITES</scope>
    <scope>DOMAIN</scope>
    <scope>FUNCTION</scope>
    <scope>INTERACTION WITH TCR</scope>
</reference>
<reference key="31">
    <citation type="journal article" date="2017" name="Nat. Immunol.">
        <title>Drugs and drug-like molecules can modulate the function of mucosal-associated invariant T cells.</title>
        <authorList>
            <person name="Keller A.N."/>
            <person name="Eckle S.B."/>
            <person name="Xu W."/>
            <person name="Liu L."/>
            <person name="Hughes V.A."/>
            <person name="Mak J.Y."/>
            <person name="Meehan B.S."/>
            <person name="Pediongco T."/>
            <person name="Birkinshaw R.W."/>
            <person name="Chen Z."/>
            <person name="Wang H."/>
            <person name="D'Souza C."/>
            <person name="Kjer-Nielsen L."/>
            <person name="Gherardin N.A."/>
            <person name="Godfrey D.I."/>
            <person name="Kostenko L."/>
            <person name="Corbett A.J."/>
            <person name="Purcell A.W."/>
            <person name="Fairlie D.P."/>
            <person name="McCluskey J."/>
            <person name="Rossjohn J."/>
        </authorList>
    </citation>
    <scope>X-RAY CRYSTALLOGRAPHY (1.90 ANGSTROMS) OF 23-292 IN COMPLEX WITH B2M AND DRUG</scope>
    <scope>ACTIVITY REGULATION</scope>
</reference>
<reference key="32">
    <citation type="journal article" date="2020" name="Sci. Immunol.">
        <title>Absence of mucosal-associated invariant T cells in a person with a homozygous point mutation in MR1.</title>
        <authorList>
            <person name="Howson L.J."/>
            <person name="Awad W."/>
            <person name="von Borstel A."/>
            <person name="Lim H.J."/>
            <person name="McWilliam H.E.G."/>
            <person name="Sandoval-Romero M.L."/>
            <person name="Majumdar S."/>
            <person name="Hamzeh A.R."/>
            <person name="Andrews T.D."/>
            <person name="McDermott D.H."/>
            <person name="Murphy P.M."/>
            <person name="Le Nours J."/>
            <person name="Mak J.Y.W."/>
            <person name="Liu L."/>
            <person name="Fairlie D.P."/>
            <person name="McCluskey J."/>
            <person name="Villadangos J.A."/>
            <person name="Cook M.C."/>
            <person name="Turner S.J."/>
            <person name="Davey M.S."/>
            <person name="Ojaimi S."/>
            <person name="Rossjohn J."/>
        </authorList>
    </citation>
    <scope>X-RAY CRYSTALLOGRAPHY (1.89 ANGSTROMS) OF 23-292</scope>
    <scope>CHARACTERIZATION OF VARIANT HIS-31</scope>
    <scope>FUNCTION</scope>
</reference>
<reference key="33">
    <citation type="journal article" date="2022" name="Nat. Chem. Biol.">
        <title>TAPBPR employs a ligand-independent docking mechanism to chaperone MR1 molecules.</title>
        <authorList>
            <person name="McShan A.C."/>
            <person name="Devlin C.A."/>
            <person name="Papadaki G.F."/>
            <person name="Sun Y."/>
            <person name="Green A.I."/>
            <person name="Morozov G.I."/>
            <person name="Burslem G.M."/>
            <person name="Procko E."/>
            <person name="Sgourakis N.G."/>
        </authorList>
    </citation>
    <scope>STRUCTURE BY NMR OF 34-204</scope>
    <scope>INTERACTION WITH TAPBPL</scope>
    <scope>SUBUNIT</scope>
    <scope>MUTAGENESIS OF MET-72; HIS-105 AND GLN-175</scope>
</reference>
<reference key="34">
    <citation type="journal article" date="2024" name="Immunity">
        <title>The carbonyl nucleobase adduct M&lt;sub&gt;3&lt;/sub&gt;Ade is a potent antigen for adaptive polyclonal MR1-restricted T cells.</title>
        <authorList>
            <person name="Chancellor A."/>
            <person name="Constantin D."/>
            <person name="Berloffa G."/>
            <person name="Yang Q."/>
            <person name="Nosi V."/>
            <person name="Loureiro J.P."/>
            <person name="Colombo R."/>
            <person name="Jakob R.P."/>
            <person name="Joss D."/>
            <person name="Pfeffer M."/>
            <person name="De Simone G."/>
            <person name="Morabito A."/>
            <person name="Schaefer V."/>
            <person name="Vacchini A."/>
            <person name="Brunelli L."/>
            <person name="Montagna D."/>
            <person name="Heim M."/>
            <person name="Zippelius A."/>
            <person name="Davoli E."/>
            <person name="Haussinger D."/>
            <person name="Maier T."/>
            <person name="Mori L."/>
            <person name="De Libero G."/>
        </authorList>
    </citation>
    <scope>X-RAY CRYSTALLOGRAPHY (2.80 ANGSTROMS) OF 23-291 IN COMPLEX WITH B2M AND METABOLITE ANTIGEN</scope>
    <scope>FUNCTION (ALLELE MR1*01)</scope>
</reference>
<reference key="35">
    <citation type="journal article" date="2024" name="Proc. Natl. Acad. Sci. U.S.A.">
        <title>MR1 presents vitamin B6-related compounds for recognition by MR1-reactive T cells.</title>
        <authorList>
            <person name="McInerney M.P."/>
            <person name="Awad W."/>
            <person name="Souter M.N.T."/>
            <person name="Kang Y."/>
            <person name="Wang C.J.H."/>
            <person name="Chan Yew Poa K."/>
            <person name="Abdelaal M.R."/>
            <person name="Le N.H."/>
            <person name="Shepherd C.M."/>
            <person name="McNeice C."/>
            <person name="Meehan L.J."/>
            <person name="Nelson A.G."/>
            <person name="Raynes J.M."/>
            <person name="Mak J.Y.W."/>
            <person name="McCluskey J."/>
            <person name="Chen Z."/>
            <person name="Ang C.S."/>
            <person name="Fairlie D.P."/>
            <person name="Le Nours J."/>
            <person name="Illing P.T."/>
            <person name="Rossjohn J."/>
            <person name="Purcell A.W."/>
        </authorList>
    </citation>
    <scope>X-RAY CRYSTALLOGRAPHY (2.00 ANGSTROMS) OF 23-292 IN COMPLEX WITH B2M AND METABOLITE ANTIGEN</scope>
    <scope>FUNCTION (ALLELES MR1*01 AND MR1*04)</scope>
    <scope>MUTAGENESIS OF LYS-65</scope>
    <scope>POLYMORPHISM</scope>
</reference>
<name>HMR1_HUMAN</name>
<comment type="function">
    <text evidence="1 7 9 10 11 13 14 15 16 18 20 21 23 24">Antigen-presenting molecule specialized in displaying microbial pyrimidine-based metabolites to alpha-beta T cell receptors (TCR) on innate-type mucosal-associated invariant T (MAIT) cells (PubMed:19416870, PubMed:23457030, PubMed:22692454, PubMed:23051753, PubMed:24101382, PubMed:23846752, PubMed:26795251). In complex with B2M preferentially presents riboflavin-derived metabolites to semi-invariant TRAV1.2 TCRs on MAIT cells, guiding immune surveillance of the microbial metabolome at mucosal epithelial barriers (PubMed:20581831, PubMed:24101382, PubMed:24695216, PubMed:26795251). Signature pyrimidine-based microbial antigens are generated via non-enzymatic condensation of metabolite intermediates of the riboflavin pathway with by-products arising from other metabolic pathways such as glycolysis. Typical potent antigenic metabolites are 5-(2-oxoethylideneamino)-6-D-ribitylaminouracil (5-OE-RU) and 5-(2-oxopropylideneamino)-6-D-ribitylaminouracil (5-OP-RU), products of condensation of 5-amino-6-D-ribityaminouracil (5-A-RU) with glyoxal or methylglyoxal by-products, respectively (PubMed:24695216, PubMed:32958637, PubMed:32709702). May present microbial antigens to various TRAV1-2-negative MAIT cell subsets, providing for unique recognition of diverse microbes, including pathogens that do not synthesize riboflavin (PubMed:27527800, PubMed:31113973). Upon antigen recognition, elicits rapid innate-type MAIT cell activation to eliminate pathogenic microbes by directly killing infected cells (PubMed:23846752, PubMed:24695216, PubMed:27527800). During T cell development, drives thymic selection and post-thymic terminal differentiation of MAIT cells in a process dependent on commensal microflora (By similarity). Acts as an immune sensor of cancer cell metabolome (PubMed:31959982). May present a tumor-specific or -associated metabolite essential for cancer cell survival to a 'pan-cancer' TCR consisting of TRAV38.2-DV8*TRAJ31 alpha chain paired with a TRBV25.1*TRBJ2.3 beta chain on a non-MAIT CD8-positive T cell clone (MC.7.G5), triggering T cell-mediated killing of a wide range of cancer cell types (PubMed:31959982).</text>
</comment>
<comment type="function">
    <text evidence="28 29">Allele MR1*01: Presents microbial-derived metabolite 5-OP-RU to semi-invariant TRAV1.2-TRAJ33-TRBV6.1 (A-F7) TCR on MAIT cells (PubMed:39589872). Presents nucleobase carbonyl adducts generated during oxidative stress. Captures M3Ade, a nucleobase adduct composed of one adenine modified by a malondialdehyde trimer, for recognition by MR1-restricted T cell clones expressing a polyclonal TCR repertoire (PubMed:39701104). Displays moderate binding affinity toward tumor-enriched pyridoxal and pyridoxal 5'-phosphate antigens (PubMed:39589872).</text>
</comment>
<comment type="function">
    <text evidence="27 28">Allele MR1*04: Presents tumor-enriched metabolite pyridoxal to pan-cancer 7.G5 TCR on T cells enabling preferential recognition of cancer cells. May act as an alloantigen.</text>
</comment>
<comment type="activity regulation">
    <text evidence="19">Inhibited by pterin-based metabolites such as 6-formylpterin (6-FP, a product of folic acid photodegradation). 6-FP competitively inhibits MAIT cell activation by 5-OP-RU (PubMed:23846752, PubMed:28166217). Modulated by commonly prescribed anti-inflammatory drug metabolites. Inhibited by salicilates such as 3-formylsalicylic and 5-formylsalicylic acids. Activated by diclofenac and/or its hydroxy metabolites (PubMed:28166217).</text>
</comment>
<comment type="subunit">
    <text evidence="5 11 13 14 15 16 17 24 26 28 29">Heterotrimer that consists of MR1, B2M and a metabolite antigen (PubMed:23051753, PubMed:23846752, PubMed:24695216, PubMed:27043408). Major classes of metabolite ligands presented by MR1 include riboflavin-related antigens, pyrimidines and ribityl lumazines, nucleobase adducts and folate derivatives. Forms reversible covalent Schiff base complexes with microbial pyrimidine-based metabolite, which serves as a molecular switch triggering complete folding, stable association with B2M and translocation of the ternary complex from endoplasmic reticulum to the plasma membrane. Alternatively, forms non-Schiff base complexes with ribityl lumazines (PubMed:23051753, PubMed:23846752, PubMed:24101382, PubMed:24695216, PubMed:26795251, PubMed:27043408, PubMed:32958637, PubMed:39589872, PubMed:39701104). On antigen-presenting cells, the ternary complex interacts with TCR on MR1-restricted T cells, predominantly represented by CD8-positive and CD4- and CD8-double negative MAIT cell subsets (PubMed:24101382, PubMed:23846752, PubMed:24695216, PubMed:26795251). Interacts with TAPBP and TAPBPL chaperones in the endoplasmic reticulum. TAPBP associated or not with MHC class I peptide loading complex binds ligand-free MR1 or MR1-B2M complex, providing for stable MR1 pools ready for metabolite antigen processing. TAPBPL interacts with MR1 in a ligand-independent way; this interaction may stabilize MR1 pool and facilitate ligand loading and dissociation (PubMed:12794138, PubMed:32958637, PubMed:35725941). MR1-B2M heterodimer adopts a topology similar to classical MHC class I molecules, with alpha-1 and alpha-2 domains of MR1 forming the antigen-binding cleft composed of two alpha-helices resting on a floor of 7-stranded anti-parallel beta-pleated sheet (PubMed:23846752, PubMed:24695216, PubMed:26795251). The ribityl moiety of pyrimidine-based antigens is recognized by Tyr-95 residue in the CDR3 alpha loop of the invariant TRAV1-2 TCR (PubMed:23846752, PubMed:24695216, PubMed:26795251).</text>
</comment>
<comment type="subunit">
    <molecule>Isoform 3</molecule>
    <text evidence="12 39">Homodimerizes and does not associate with B2M.</text>
</comment>
<comment type="interaction">
    <interactant intactId="EBI-10280401">
        <id>Q95460</id>
    </interactant>
    <interactant intactId="EBI-743099">
        <id>Q969F0</id>
        <label>FATE1</label>
    </interactant>
    <organismsDiffer>false</organismsDiffer>
    <experiments>3</experiments>
</comment>
<comment type="interaction">
    <interactant intactId="EBI-16016814">
        <id>Q95460-1</id>
    </interactant>
    <interactant intactId="EBI-714718">
        <id>P61769</id>
        <label>B2M</label>
    </interactant>
    <organismsDiffer>false</organismsDiffer>
    <experiments>3</experiments>
</comment>
<comment type="interaction">
    <interactant intactId="EBI-12201447">
        <id>Q95460-2</id>
    </interactant>
    <interactant intactId="EBI-3913685">
        <id>O95674</id>
        <label>CDS2</label>
    </interactant>
    <organismsDiffer>false</organismsDiffer>
    <experiments>3</experiments>
</comment>
<comment type="interaction">
    <interactant intactId="EBI-12201447">
        <id>Q95460-2</id>
    </interactant>
    <interactant intactId="EBI-3911467">
        <id>Q07325</id>
        <label>CXCL9</label>
    </interactant>
    <organismsDiffer>false</organismsDiffer>
    <experiments>3</experiments>
</comment>
<comment type="interaction">
    <interactant intactId="EBI-12201447">
        <id>Q95460-2</id>
    </interactant>
    <interactant intactId="EBI-3907816">
        <id>P54852</id>
        <label>EMP3</label>
    </interactant>
    <organismsDiffer>false</organismsDiffer>
    <experiments>3</experiments>
</comment>
<comment type="interaction">
    <interactant intactId="EBI-12201447">
        <id>Q95460-2</id>
    </interactant>
    <interactant intactId="EBI-10976398">
        <id>Q7Z2K6</id>
        <label>ERMP1</label>
    </interactant>
    <organismsDiffer>false</organismsDiffer>
    <experiments>3</experiments>
</comment>
<comment type="interaction">
    <interactant intactId="EBI-12201447">
        <id>Q95460-2</id>
    </interactant>
    <interactant intactId="EBI-743099">
        <id>Q969F0</id>
        <label>FATE1</label>
    </interactant>
    <organismsDiffer>false</organismsDiffer>
    <experiments>3</experiments>
</comment>
<comment type="interaction">
    <interactant intactId="EBI-12201447">
        <id>Q95460-2</id>
    </interactant>
    <interactant intactId="EBI-3925203">
        <id>Q8N3T1</id>
        <label>GALNT15</label>
    </interactant>
    <organismsDiffer>false</organismsDiffer>
    <experiments>3</experiments>
</comment>
<comment type="interaction">
    <interactant intactId="EBI-12201447">
        <id>Q95460-2</id>
    </interactant>
    <interactant intactId="EBI-10317425">
        <id>Q9NZG7</id>
        <label>NINJ2</label>
    </interactant>
    <organismsDiffer>false</organismsDiffer>
    <experiments>3</experiments>
</comment>
<comment type="subcellular location">
    <subcellularLocation>
        <location evidence="5 6 17 24">Cell membrane</location>
        <topology>Single-pass type I membrane protein</topology>
    </subcellularLocation>
    <subcellularLocation>
        <location evidence="6 17 24">Endoplasmic reticulum membrane</location>
        <topology evidence="2">Single-pass type I membrane protein</topology>
    </subcellularLocation>
    <subcellularLocation>
        <location evidence="6">Golgi apparatus membrane</location>
        <topology evidence="2">Single-pass type I membrane protein</topology>
    </subcellularLocation>
    <subcellularLocation>
        <location evidence="17">Early endosome membrane</location>
        <topology evidence="2">Single-pass type I membrane protein</topology>
    </subcellularLocation>
    <subcellularLocation>
        <location evidence="6 17">Late endosome membrane</location>
        <topology evidence="2">Single-pass type I membrane protein</topology>
    </subcellularLocation>
    <text evidence="17">In the absence of antigen remains within the endoplasmic reticulum where it acts as a metabolite sensor. Antigen binding triggers trafficking of the ternary complex to the plasma membrane. After presentation, most of these complexes are rapidly internalized and degraded via endocytosis. A small subset recycles via endosomes back to the plasma membrane and may thus acquire and present new antigens that do not efficiently reach the endoplasmic reticulum.</text>
</comment>
<comment type="subcellular location">
    <molecule>Isoform 1</molecule>
    <subcellularLocation>
        <location evidence="12">Cell membrane</location>
        <topology evidence="2">Single-pass type I membrane protein</topology>
    </subcellularLocation>
    <subcellularLocation>
        <location evidence="12">Endoplasmic reticulum membrane</location>
        <topology evidence="2">Single-pass membrane protein</topology>
    </subcellularLocation>
</comment>
<comment type="subcellular location">
    <molecule>Isoform 3</molecule>
    <subcellularLocation>
        <location evidence="12">Cell membrane</location>
        <topology evidence="2">Single-pass type I membrane protein</topology>
    </subcellularLocation>
    <subcellularLocation>
        <location evidence="12">Endoplasmic reticulum membrane</location>
        <topology evidence="2">Single-pass membrane protein</topology>
    </subcellularLocation>
    <text evidence="12">The larger proportion remains in the ER in an immature state. The subset that reach cell surface does it through a B2M-independent pathway.</text>
</comment>
<comment type="subcellular location">
    <molecule>Isoform 4</molecule>
    <subcellularLocation>
        <location evidence="37">Secreted</location>
    </subcellularLocation>
</comment>
<comment type="alternative products">
    <event type="alternative splicing"/>
    <isoform>
        <id>Q95460-1</id>
        <name>1</name>
        <name evidence="36">MR1A</name>
        <sequence type="displayed"/>
    </isoform>
    <isoform>
        <id>Q95460-2</id>
        <name>2</name>
        <sequence type="described" ref="VSP_034755"/>
    </isoform>
    <isoform>
        <id>Q95460-3</id>
        <name>3</name>
        <name>MR1B</name>
        <name evidence="36">MR1D</name>
        <sequence type="described" ref="VSP_034757"/>
    </isoform>
    <isoform>
        <id>Q95460-4</id>
        <name>4</name>
        <name>MR1C</name>
        <sequence type="described" ref="VSP_034756 VSP_034758"/>
    </isoform>
    <isoform>
        <id>Q95460-5</id>
        <name>5</name>
        <sequence type="described" ref="VSP_043479"/>
    </isoform>
</comment>
<comment type="tissue specificity">
    <text evidence="8 10 17 30 31">Ubiquitous (PubMed:7624800, PubMed:9780177). Low expression is detected in peripheral blood B cells, T cells, monocytes and in bronchial epithelial cells (at protein level) (PubMed:27043408). Expressed in plasmablasts or plasma B cells in the lamina propria of ileum, appendix and colon (at protein level) (PubMed:19760593). Highly expressed on a subset of CD45-positive CD3-positive thymocytes (at protein level) (PubMed:22692454).</text>
</comment>
<comment type="induction">
    <text evidence="22">(Microbial infection) Down-regulated upon infection with HHV-1/HSV-1 and HCMV herpesviruses. HSV-1 targets ligand-free MR1 to proteasomal degradation; this process requires de novo viral protein expression with US3 acting as immunoevasin partly responsible for inhibition of MR1 expression and antigen presentation in response to bacterial infection. Whereas HCMV has evolved ways to shut down both ligand-free and ligand-bound MR1 expression.</text>
</comment>
<comment type="domain">
    <text evidence="13 15 16">The alpha-1 domain is a structural part of antigen-binding cleft.</text>
</comment>
<comment type="domain">
    <text evidence="15 16">The alpha-2 domain is a structural part of antigen-binding cleft.</text>
</comment>
<comment type="PTM">
    <text evidence="5 17">N-glycosylated.</text>
</comment>
<comment type="polymorphism">
    <text evidence="4 25 27 28">Initially considered monomorphic, however recent studies show MR1 genetic diversity in human populations with allelic variants that impact antigen presentation. An analysis of a small cohort of 56 donors found six distinct alleles with MR1*01 and MR1*02 being the most frequent ones. The sequence shown is that of MR1*01.</text>
</comment>
<comment type="similarity">
    <text evidence="38">Belongs to the MHC class I family.</text>
</comment>
<comment type="sequence caution" evidence="38">
    <conflict type="erroneous initiation">
        <sequence resource="EMBL-CDS" id="AAD01443"/>
    </conflict>
    <text>Truncated N-terminus.</text>
</comment>
<sequence>MGELMAFLLPLIIVLMVKHSDSRTHSLRYFRLGVSDPIHGVPEFISVGYVDSHPITTYDSVTRQKEPRAPWMAENLAPDHWERYTQLLRGWQQMFKVELKRLQRHYNHSGSHTYQRMIGCELLEDGSTTGFLQYAYDGQDFLIFNKDTLSWLAVDNVAHTIKQAWEANQHELLYQKNWLEEECIAWLKRFLEYGKDTLQRTEPPLVRVNRKETFPGVTALFCKAHGFYPPEIYMTWMKNGEEIVQEIDYGDILPSGDGTYQAWASIELDPQSSNLYSCHVEHCGVHMVLQVPQESETIPLVMKAVSGSIVLVIVLAGVGVLVWRRRPREQNGAIYLPTPDR</sequence>
<gene>
    <name evidence="35 40" type="primary">MR1</name>
</gene>
<proteinExistence type="evidence at protein level"/>